<proteinExistence type="evidence at protein level"/>
<comment type="function">
    <text evidence="1 2 6">DNA-dependent RNA polymerase (RNAP) catalyzes the transcription of DNA into RNA using the four ribonucleoside triphosphates as substrates.</text>
</comment>
<comment type="function">
    <text evidence="6 9">Resistance to the antibiotics salinamide A, salinamide B, rifampicin, streptolydigin, CBR703, myxopyronin, and lipiarmycin can result from mutations in this protein.</text>
</comment>
<comment type="function">
    <text evidence="7">Part of the processive rRNA transcription and antitermination complex (rrnTAC). The complex forms an RNA-chaperone ring around the RNA exit tunnel of RNAP. It supports rapid transcription and antitermination of rRNA operons, cotranscriptional rRNA folding, and annealing of distal rRNA regions to allow correct ribosome biogenesis.</text>
</comment>
<comment type="catalytic activity">
    <reaction evidence="1">
        <text>RNA(n) + a ribonucleoside 5'-triphosphate = RNA(n+1) + diphosphate</text>
        <dbReference type="Rhea" id="RHEA:21248"/>
        <dbReference type="Rhea" id="RHEA-COMP:14527"/>
        <dbReference type="Rhea" id="RHEA-COMP:17342"/>
        <dbReference type="ChEBI" id="CHEBI:33019"/>
        <dbReference type="ChEBI" id="CHEBI:61557"/>
        <dbReference type="ChEBI" id="CHEBI:140395"/>
        <dbReference type="EC" id="2.7.7.6"/>
    </reaction>
</comment>
<comment type="cofactor">
    <cofactor evidence="6 7 11 12">
        <name>Mg(2+)</name>
        <dbReference type="ChEBI" id="CHEBI:18420"/>
    </cofactor>
    <text evidence="6 7 11 12">Binds 1 Mg(2+) ion per subunit.</text>
</comment>
<comment type="cofactor">
    <cofactor evidence="6 7 11 12">
        <name>Zn(2+)</name>
        <dbReference type="ChEBI" id="CHEBI:29105"/>
    </cofactor>
    <text evidence="6 7">Binds 2 Zn(2+) ions per subunit.</text>
</comment>
<comment type="subunit">
    <text evidence="1 2 4 6 7">The RNAP catalytic core consists of 2 alpha, 1 beta, 1 beta' and 1 omega subunit. When a sigma factor is associated with the core the holoenzyme is formed, which can initiate transcription. The rRNA transcription and antitermination complex (rrnTAC) consists of RNAP, NusA, NusB, NusE (rpsJ), NusG, SubB, ribosomal protein S4, DNA and precursor rRNA; S4 is more flexible than other subunits (PubMed:32871103).</text>
</comment>
<comment type="interaction">
    <interactant intactId="EBI-543604">
        <id>P0A8T7</id>
    </interactant>
    <interactant intactId="EBI-543592">
        <id>P69441</id>
        <label>adk</label>
    </interactant>
    <organismsDiffer>false</organismsDiffer>
    <experiments>2</experiments>
</comment>
<comment type="interaction">
    <interactant intactId="EBI-543604">
        <id>P0A8T7</id>
    </interactant>
    <interactant intactId="EBI-369221">
        <id>P0A6Z3</id>
        <label>htpG</label>
    </interactant>
    <organismsDiffer>false</organismsDiffer>
    <experiments>3</experiments>
</comment>
<comment type="interaction">
    <interactant intactId="EBI-543604">
        <id>P0A8T7</id>
    </interactant>
    <interactant intactId="EBI-544996">
        <id>P0A8V2</id>
        <label>rpoB</label>
    </interactant>
    <organismsDiffer>false</organismsDiffer>
    <experiments>11</experiments>
</comment>
<comment type="interaction">
    <interactant intactId="EBI-543604">
        <id>P0A8T7</id>
    </interactant>
    <interactant intactId="EBI-545104">
        <id>P00579</id>
        <label>rpoD</label>
    </interactant>
    <organismsDiffer>false</organismsDiffer>
    <experiments>11</experiments>
</comment>
<comment type="interaction">
    <interactant intactId="EBI-543604">
        <id>P0A8T7</id>
    </interactant>
    <interactant intactId="EBI-559573">
        <id>P03018</id>
        <label>uvrD</label>
    </interactant>
    <organismsDiffer>false</organismsDiffer>
    <experiments>3</experiments>
</comment>
<comment type="PTM">
    <text evidence="3 5">Acetylated on several lysine residues in the presence of glucose.</text>
</comment>
<comment type="biotechnology">
    <text evidence="6">Co-administration of salinamide and rifampicin or salinamide and myxopyronin suppresses the emergence of resistance to both antibiotics.</text>
</comment>
<comment type="similarity">
    <text evidence="1">Belongs to the RNA polymerase beta' chain family.</text>
</comment>
<name>RPOC_ECOLI</name>
<evidence type="ECO:0000255" key="1">
    <source>
        <dbReference type="HAMAP-Rule" id="MF_01322"/>
    </source>
</evidence>
<evidence type="ECO:0000269" key="2">
    <source>
    </source>
</evidence>
<evidence type="ECO:0000269" key="3">
    <source>
    </source>
</evidence>
<evidence type="ECO:0000269" key="4">
    <source>
    </source>
</evidence>
<evidence type="ECO:0000269" key="5">
    <source>
    </source>
</evidence>
<evidence type="ECO:0000269" key="6">
    <source>
    </source>
</evidence>
<evidence type="ECO:0000269" key="7">
    <source>
    </source>
</evidence>
<evidence type="ECO:0000305" key="8"/>
<evidence type="ECO:0000305" key="9">
    <source>
    </source>
</evidence>
<evidence type="ECO:0007744" key="10">
    <source>
        <dbReference type="PDB" id="3IYD"/>
    </source>
</evidence>
<evidence type="ECO:0007744" key="11">
    <source>
        <dbReference type="PDB" id="4MEX"/>
    </source>
</evidence>
<evidence type="ECO:0007744" key="12">
    <source>
        <dbReference type="PDB" id="4MEY"/>
    </source>
</evidence>
<evidence type="ECO:0007744" key="13">
    <source>
        <dbReference type="PDB" id="6TQN"/>
    </source>
</evidence>
<evidence type="ECO:0007744" key="14">
    <source>
        <dbReference type="PDB" id="6TQO"/>
    </source>
</evidence>
<evidence type="ECO:0007829" key="15">
    <source>
        <dbReference type="PDB" id="2AUK"/>
    </source>
</evidence>
<evidence type="ECO:0007829" key="16">
    <source>
        <dbReference type="PDB" id="4IQZ"/>
    </source>
</evidence>
<evidence type="ECO:0007829" key="17">
    <source>
        <dbReference type="PDB" id="6GH5"/>
    </source>
</evidence>
<evidence type="ECO:0007829" key="18">
    <source>
        <dbReference type="PDB" id="6PSR"/>
    </source>
</evidence>
<evidence type="ECO:0007829" key="19">
    <source>
        <dbReference type="PDB" id="6PSS"/>
    </source>
</evidence>
<evidence type="ECO:0007829" key="20">
    <source>
        <dbReference type="PDB" id="6PST"/>
    </source>
</evidence>
<evidence type="ECO:0007829" key="21">
    <source>
        <dbReference type="PDB" id="6XL5"/>
    </source>
</evidence>
<evidence type="ECO:0007829" key="22">
    <source>
        <dbReference type="PDB" id="6XL9"/>
    </source>
</evidence>
<evidence type="ECO:0007829" key="23">
    <source>
        <dbReference type="PDB" id="6XLJ"/>
    </source>
</evidence>
<evidence type="ECO:0007829" key="24">
    <source>
        <dbReference type="PDB" id="7QWP"/>
    </source>
</evidence>
<evidence type="ECO:0007829" key="25">
    <source>
        <dbReference type="PDB" id="7QXI"/>
    </source>
</evidence>
<evidence type="ECO:0007829" key="26">
    <source>
        <dbReference type="PDB" id="7UBM"/>
    </source>
</evidence>
<evidence type="ECO:0007829" key="27">
    <source>
        <dbReference type="PDB" id="7UWE"/>
    </source>
</evidence>
<evidence type="ECO:0007829" key="28">
    <source>
        <dbReference type="PDB" id="7W5X"/>
    </source>
</evidence>
<evidence type="ECO:0007829" key="29">
    <source>
        <dbReference type="PDB" id="7YPA"/>
    </source>
</evidence>
<evidence type="ECO:0007829" key="30">
    <source>
        <dbReference type="PDB" id="7YPB"/>
    </source>
</evidence>
<evidence type="ECO:0007829" key="31">
    <source>
        <dbReference type="PDB" id="8F1J"/>
    </source>
</evidence>
<evidence type="ECO:0007829" key="32">
    <source>
        <dbReference type="PDB" id="8FVR"/>
    </source>
</evidence>
<evidence type="ECO:0007829" key="33">
    <source>
        <dbReference type="PDB" id="8FVW"/>
    </source>
</evidence>
<evidence type="ECO:0007829" key="34">
    <source>
        <dbReference type="PDB" id="8HKC"/>
    </source>
</evidence>
<evidence type="ECO:0007829" key="35">
    <source>
        <dbReference type="PDB" id="8JO2"/>
    </source>
</evidence>
<evidence type="ECO:0007829" key="36">
    <source>
        <dbReference type="PDB" id="8K58"/>
    </source>
</evidence>
<evidence type="ECO:0007829" key="37">
    <source>
        <dbReference type="PDB" id="8PBL"/>
    </source>
</evidence>
<evidence type="ECO:0007829" key="38">
    <source>
        <dbReference type="PDB" id="8PIB"/>
    </source>
</evidence>
<evidence type="ECO:0007829" key="39">
    <source>
        <dbReference type="PDB" id="8TO1"/>
    </source>
</evidence>
<evidence type="ECO:0007829" key="40">
    <source>
        <dbReference type="PDB" id="8TO6"/>
    </source>
</evidence>
<evidence type="ECO:0007829" key="41">
    <source>
        <dbReference type="PDB" id="8TO8"/>
    </source>
</evidence>
<evidence type="ECO:0007829" key="42">
    <source>
        <dbReference type="PDB" id="8TXO"/>
    </source>
</evidence>
<feature type="chain" id="PRO_0000067741" description="DNA-directed RNA polymerase subunit beta'">
    <location>
        <begin position="1"/>
        <end position="1407"/>
    </location>
</feature>
<feature type="binding site" evidence="7 11 12">
    <location>
        <position position="70"/>
    </location>
    <ligand>
        <name>Zn(2+)</name>
        <dbReference type="ChEBI" id="CHEBI:29105"/>
        <label>1</label>
    </ligand>
</feature>
<feature type="binding site" evidence="7 11 12">
    <location>
        <position position="72"/>
    </location>
    <ligand>
        <name>Zn(2+)</name>
        <dbReference type="ChEBI" id="CHEBI:29105"/>
        <label>1</label>
    </ligand>
</feature>
<feature type="binding site" evidence="7 11 12">
    <location>
        <position position="85"/>
    </location>
    <ligand>
        <name>Zn(2+)</name>
        <dbReference type="ChEBI" id="CHEBI:29105"/>
        <label>1</label>
    </ligand>
</feature>
<feature type="binding site" evidence="7 11 12">
    <location>
        <position position="88"/>
    </location>
    <ligand>
        <name>Zn(2+)</name>
        <dbReference type="ChEBI" id="CHEBI:29105"/>
        <label>1</label>
    </ligand>
</feature>
<feature type="binding site" evidence="7 11 12">
    <location>
        <position position="460"/>
    </location>
    <ligand>
        <name>Mg(2+)</name>
        <dbReference type="ChEBI" id="CHEBI:18420"/>
    </ligand>
</feature>
<feature type="binding site" evidence="7 11 12">
    <location>
        <position position="462"/>
    </location>
    <ligand>
        <name>Mg(2+)</name>
        <dbReference type="ChEBI" id="CHEBI:18420"/>
    </ligand>
</feature>
<feature type="binding site" evidence="7 11 12">
    <location>
        <position position="464"/>
    </location>
    <ligand>
        <name>Mg(2+)</name>
        <dbReference type="ChEBI" id="CHEBI:18420"/>
    </ligand>
</feature>
<feature type="binding site" evidence="7 11 12">
    <location>
        <position position="814"/>
    </location>
    <ligand>
        <name>Zn(2+)</name>
        <dbReference type="ChEBI" id="CHEBI:29105"/>
        <label>2</label>
    </ligand>
</feature>
<feature type="binding site" evidence="7 11 12">
    <location>
        <position position="888"/>
    </location>
    <ligand>
        <name>Zn(2+)</name>
        <dbReference type="ChEBI" id="CHEBI:29105"/>
        <label>2</label>
    </ligand>
</feature>
<feature type="binding site" evidence="7 11 12">
    <location>
        <position position="895"/>
    </location>
    <ligand>
        <name>Zn(2+)</name>
        <dbReference type="ChEBI" id="CHEBI:29105"/>
        <label>2</label>
    </ligand>
</feature>
<feature type="binding site" evidence="7 11 12">
    <location>
        <position position="898"/>
    </location>
    <ligand>
        <name>Zn(2+)</name>
        <dbReference type="ChEBI" id="CHEBI:29105"/>
        <label>2</label>
    </ligand>
</feature>
<feature type="modified residue" description="N6-acetyllysine" evidence="1 3">
    <location>
        <position position="983"/>
    </location>
</feature>
<feature type="mutagenesis site" description="Resistant to antibiotics salinamide A and B." evidence="6">
    <original>Q</original>
    <variation>P</variation>
    <location>
        <position position="504"/>
    </location>
</feature>
<feature type="mutagenesis site" description="Resistant to antibiotics salinamide A and B." evidence="6">
    <original>N</original>
    <variation>D</variation>
    <location>
        <position position="690"/>
    </location>
</feature>
<feature type="mutagenesis site" description="Resistant to antibiotics salinamide A and B." evidence="6">
    <original>M</original>
    <variation>V</variation>
    <location>
        <position position="697"/>
    </location>
</feature>
<feature type="mutagenesis site" description="Resistant to antibiotics salinamide A and B." evidence="6">
    <original>A</original>
    <variation>T</variation>
    <location>
        <position position="735"/>
    </location>
</feature>
<feature type="mutagenesis site" description="Resistant to antibiotics salinamide A and B." evidence="6">
    <original>R</original>
    <variation>C</variation>
    <variation>H</variation>
    <variation>P</variation>
    <variation>S</variation>
    <location>
        <position position="738"/>
    </location>
</feature>
<feature type="mutagenesis site" description="Resistant to antibiotics salinamide A and B." evidence="6">
    <original>A</original>
    <variation>E</variation>
    <location>
        <position position="748"/>
    </location>
</feature>
<feature type="mutagenesis site" description="Resistant to antibiotics salinamide A and B." evidence="6">
    <original>P</original>
    <variation>S</variation>
    <variation>T</variation>
    <location>
        <position position="758"/>
    </location>
</feature>
<feature type="mutagenesis site" description="Resistant to antibiotics salinamide A and B." evidence="6">
    <original>F</original>
    <variation>C</variation>
    <location>
        <position position="763"/>
    </location>
</feature>
<feature type="mutagenesis site" description="Resistant to antibiotics salinamide A and B." evidence="6">
    <original>S</original>
    <variation>A</variation>
    <location>
        <position position="775"/>
    </location>
</feature>
<feature type="mutagenesis site" description="Resistant to antibiotics salinamide A and B." evidence="6">
    <original>A</original>
    <variation>T</variation>
    <variation>V</variation>
    <location>
        <position position="779"/>
    </location>
</feature>
<feature type="mutagenesis site" description="Resistant to antibiotics salinamide A and B." evidence="6">
    <original>R</original>
    <variation>C</variation>
    <location>
        <position position="780"/>
    </location>
</feature>
<feature type="mutagenesis site" description="Resistant to antibiotics salinamide A and B." evidence="6">
    <original>G</original>
    <variation>A</variation>
    <variation>C</variation>
    <location>
        <position position="782"/>
    </location>
</feature>
<feature type="mutagenesis site" description="Resistant to antibiotics salinamide A and B." evidence="6">
    <original>L</original>
    <variation>R</variation>
    <location>
        <position position="783"/>
    </location>
</feature>
<feature type="sequence conflict" description="In Ref. 11; no nucleotide entry." evidence="8" ref="11">
    <original>DITGGLPRVADLFEARRPKEPAILAEISGIVSFGKETKGKRRLVI</original>
    <variation>ASPVVCRALRTCSKHVVRKSRQSWLKSAVSFPSVKKPKVNVVWLS</variation>
    <location>
        <begin position="1133"/>
        <end position="1177"/>
    </location>
</feature>
<feature type="helix" evidence="31">
    <location>
        <begin position="4"/>
        <end position="9"/>
    </location>
</feature>
<feature type="turn" evidence="17">
    <location>
        <begin position="10"/>
        <end position="12"/>
    </location>
</feature>
<feature type="strand" evidence="33">
    <location>
        <begin position="18"/>
        <end position="24"/>
    </location>
</feature>
<feature type="helix" evidence="33">
    <location>
        <begin position="27"/>
        <end position="33"/>
    </location>
</feature>
<feature type="strand" evidence="33">
    <location>
        <begin position="34"/>
        <end position="37"/>
    </location>
</feature>
<feature type="strand" evidence="36">
    <location>
        <begin position="43"/>
        <end position="45"/>
    </location>
</feature>
<feature type="strand" evidence="33">
    <location>
        <begin position="46"/>
        <end position="49"/>
    </location>
</feature>
<feature type="strand" evidence="21">
    <location>
        <begin position="55"/>
        <end position="57"/>
    </location>
</feature>
<feature type="helix" evidence="33">
    <location>
        <begin position="59"/>
        <end position="62"/>
    </location>
</feature>
<feature type="strand" evidence="37">
    <location>
        <begin position="65"/>
        <end position="68"/>
    </location>
</feature>
<feature type="strand" evidence="34">
    <location>
        <begin position="71"/>
        <end position="74"/>
    </location>
</feature>
<feature type="turn" evidence="33">
    <location>
        <begin position="79"/>
        <end position="82"/>
    </location>
</feature>
<feature type="turn" evidence="33">
    <location>
        <begin position="86"/>
        <end position="88"/>
    </location>
</feature>
<feature type="strand" evidence="31">
    <location>
        <begin position="91"/>
        <end position="93"/>
    </location>
</feature>
<feature type="helix" evidence="33">
    <location>
        <begin position="95"/>
        <end position="99"/>
    </location>
</feature>
<feature type="strand" evidence="33">
    <location>
        <begin position="102"/>
        <end position="112"/>
    </location>
</feature>
<feature type="turn" evidence="33">
    <location>
        <begin position="115"/>
        <end position="117"/>
    </location>
</feature>
<feature type="strand" evidence="33">
    <location>
        <begin position="118"/>
        <end position="121"/>
    </location>
</feature>
<feature type="helix" evidence="33">
    <location>
        <begin position="123"/>
        <end position="128"/>
    </location>
</feature>
<feature type="helix" evidence="33">
    <location>
        <begin position="132"/>
        <end position="139"/>
    </location>
</feature>
<feature type="strand" evidence="17">
    <location>
        <begin position="140"/>
        <end position="142"/>
    </location>
</feature>
<feature type="strand" evidence="33">
    <location>
        <begin position="144"/>
        <end position="148"/>
    </location>
</feature>
<feature type="strand" evidence="33">
    <location>
        <begin position="151"/>
        <end position="153"/>
    </location>
</feature>
<feature type="strand" evidence="41">
    <location>
        <begin position="159"/>
        <end position="161"/>
    </location>
</feature>
<feature type="helix" evidence="33">
    <location>
        <begin position="162"/>
        <end position="171"/>
    </location>
</feature>
<feature type="strand" evidence="33">
    <location>
        <begin position="174"/>
        <end position="179"/>
    </location>
</feature>
<feature type="helix" evidence="33">
    <location>
        <begin position="182"/>
        <end position="190"/>
    </location>
</feature>
<feature type="helix" evidence="33">
    <location>
        <begin position="194"/>
        <end position="204"/>
    </location>
</feature>
<feature type="turn" evidence="26">
    <location>
        <begin position="205"/>
        <end position="207"/>
    </location>
</feature>
<feature type="helix" evidence="33">
    <location>
        <begin position="211"/>
        <end position="229"/>
    </location>
</feature>
<feature type="helix" evidence="33">
    <location>
        <begin position="234"/>
        <end position="237"/>
    </location>
</feature>
<feature type="strand" evidence="33">
    <location>
        <begin position="238"/>
        <end position="244"/>
    </location>
</feature>
<feature type="helix" evidence="33">
    <location>
        <begin position="247"/>
        <end position="249"/>
    </location>
</feature>
<feature type="strand" evidence="34">
    <location>
        <begin position="252"/>
        <end position="254"/>
    </location>
</feature>
<feature type="turn" evidence="33">
    <location>
        <begin position="256"/>
        <end position="258"/>
    </location>
</feature>
<feature type="strand" evidence="34">
    <location>
        <begin position="260"/>
        <end position="262"/>
    </location>
</feature>
<feature type="turn" evidence="24">
    <location>
        <begin position="263"/>
        <end position="265"/>
    </location>
</feature>
<feature type="helix" evidence="33">
    <location>
        <begin position="266"/>
        <end position="283"/>
    </location>
</feature>
<feature type="turn" evidence="33">
    <location>
        <begin position="284"/>
        <end position="286"/>
    </location>
</feature>
<feature type="helix" evidence="33">
    <location>
        <begin position="289"/>
        <end position="307"/>
    </location>
</feature>
<feature type="strand" evidence="33">
    <location>
        <begin position="311"/>
        <end position="314"/>
    </location>
</feature>
<feature type="strand" evidence="33">
    <location>
        <begin position="319"/>
        <end position="323"/>
    </location>
</feature>
<feature type="helix" evidence="33">
    <location>
        <begin position="327"/>
        <end position="331"/>
    </location>
</feature>
<feature type="strand" evidence="39">
    <location>
        <begin position="332"/>
        <end position="336"/>
    </location>
</feature>
<feature type="helix" evidence="33">
    <location>
        <begin position="337"/>
        <end position="341"/>
    </location>
</feature>
<feature type="strand" evidence="33">
    <location>
        <begin position="343"/>
        <end position="346"/>
    </location>
</feature>
<feature type="strand" evidence="33">
    <location>
        <begin position="348"/>
        <end position="357"/>
    </location>
</feature>
<feature type="strand" evidence="17">
    <location>
        <begin position="359"/>
        <end position="361"/>
    </location>
</feature>
<feature type="strand" evidence="33">
    <location>
        <begin position="365"/>
        <end position="369"/>
    </location>
</feature>
<feature type="helix" evidence="33">
    <location>
        <begin position="370"/>
        <end position="376"/>
    </location>
</feature>
<feature type="helix" evidence="33">
    <location>
        <begin position="378"/>
        <end position="387"/>
    </location>
</feature>
<feature type="turn" evidence="35">
    <location>
        <begin position="388"/>
        <end position="391"/>
    </location>
</feature>
<feature type="helix" evidence="33">
    <location>
        <begin position="394"/>
        <end position="403"/>
    </location>
</feature>
<feature type="helix" evidence="33">
    <location>
        <begin position="406"/>
        <end position="415"/>
    </location>
</feature>
<feature type="turn" evidence="31">
    <location>
        <begin position="416"/>
        <end position="418"/>
    </location>
</feature>
<feature type="strand" evidence="33">
    <location>
        <begin position="421"/>
        <end position="424"/>
    </location>
</feature>
<feature type="helix" evidence="33">
    <location>
        <begin position="431"/>
        <end position="433"/>
    </location>
</feature>
<feature type="strand" evidence="33">
    <location>
        <begin position="434"/>
        <end position="449"/>
    </location>
</feature>
<feature type="helix" evidence="33">
    <location>
        <begin position="451"/>
        <end position="453"/>
    </location>
</feature>
<feature type="helix" evidence="33">
    <location>
        <begin position="454"/>
        <end position="457"/>
    </location>
</feature>
<feature type="strand" evidence="33">
    <location>
        <begin position="461"/>
        <end position="463"/>
    </location>
</feature>
<feature type="strand" evidence="33">
    <location>
        <begin position="465"/>
        <end position="469"/>
    </location>
</feature>
<feature type="helix" evidence="33">
    <location>
        <begin position="474"/>
        <end position="483"/>
    </location>
</feature>
<feature type="helix" evidence="33">
    <location>
        <begin position="486"/>
        <end position="488"/>
    </location>
</feature>
<feature type="turn" evidence="33">
    <location>
        <begin position="493"/>
        <end position="495"/>
    </location>
</feature>
<feature type="strand" evidence="23">
    <location>
        <begin position="496"/>
        <end position="500"/>
    </location>
</feature>
<feature type="helix" evidence="33">
    <location>
        <begin position="505"/>
        <end position="514"/>
    </location>
</feature>
<feature type="strand" evidence="21">
    <location>
        <begin position="517"/>
        <end position="519"/>
    </location>
</feature>
<feature type="turn" evidence="33">
    <location>
        <begin position="521"/>
        <end position="524"/>
    </location>
</feature>
<feature type="strand" evidence="33">
    <location>
        <begin position="526"/>
        <end position="529"/>
    </location>
</feature>
<feature type="helix" evidence="33">
    <location>
        <begin position="530"/>
        <end position="538"/>
    </location>
</feature>
<feature type="strand" evidence="30">
    <location>
        <begin position="540"/>
        <end position="542"/>
    </location>
</feature>
<feature type="strand" evidence="20">
    <location>
        <begin position="544"/>
        <end position="546"/>
    </location>
</feature>
<feature type="strand" evidence="33">
    <location>
        <begin position="547"/>
        <end position="557"/>
    </location>
</feature>
<feature type="strand" evidence="34">
    <location>
        <begin position="559"/>
        <end position="561"/>
    </location>
</feature>
<feature type="strand" evidence="33">
    <location>
        <begin position="563"/>
        <end position="573"/>
    </location>
</feature>
<feature type="helix" evidence="33">
    <location>
        <begin position="574"/>
        <end position="580"/>
    </location>
</feature>
<feature type="strand" evidence="27">
    <location>
        <begin position="585"/>
        <end position="587"/>
    </location>
</feature>
<feature type="helix" evidence="33">
    <location>
        <begin position="589"/>
        <end position="591"/>
    </location>
</feature>
<feature type="strand" evidence="39">
    <location>
        <begin position="592"/>
        <end position="594"/>
    </location>
</feature>
<feature type="helix" evidence="33">
    <location>
        <begin position="598"/>
        <end position="612"/>
    </location>
</feature>
<feature type="helix" evidence="33">
    <location>
        <begin position="614"/>
        <end position="635"/>
    </location>
</feature>
<feature type="helix" evidence="33">
    <location>
        <begin position="641"/>
        <end position="643"/>
    </location>
</feature>
<feature type="helix" evidence="33">
    <location>
        <begin position="650"/>
        <end position="669"/>
    </location>
</feature>
<feature type="strand" evidence="35">
    <location>
        <begin position="671"/>
        <end position="673"/>
    </location>
</feature>
<feature type="helix" evidence="33">
    <location>
        <begin position="675"/>
        <end position="702"/>
    </location>
</feature>
<feature type="strand" evidence="33">
    <location>
        <begin position="703"/>
        <end position="707"/>
    </location>
</feature>
<feature type="strand" evidence="33">
    <location>
        <begin position="709"/>
        <end position="711"/>
    </location>
</feature>
<feature type="strand" evidence="33">
    <location>
        <begin position="713"/>
        <end position="717"/>
    </location>
</feature>
<feature type="helix" evidence="33">
    <location>
        <begin position="721"/>
        <end position="727"/>
    </location>
</feature>
<feature type="strand" evidence="32">
    <location>
        <begin position="729"/>
        <end position="731"/>
    </location>
</feature>
<feature type="helix" evidence="33">
    <location>
        <begin position="734"/>
        <end position="741"/>
    </location>
</feature>
<feature type="strand" evidence="20">
    <location>
        <begin position="745"/>
        <end position="748"/>
    </location>
</feature>
<feature type="strand" evidence="31">
    <location>
        <begin position="750"/>
        <end position="752"/>
    </location>
</feature>
<feature type="strand" evidence="20">
    <location>
        <begin position="754"/>
        <end position="759"/>
    </location>
</feature>
<feature type="turn" evidence="33">
    <location>
        <begin position="763"/>
        <end position="765"/>
    </location>
</feature>
<feature type="helix" evidence="33">
    <location>
        <begin position="769"/>
        <end position="804"/>
    </location>
</feature>
<feature type="strand" evidence="33">
    <location>
        <begin position="809"/>
        <end position="812"/>
    </location>
</feature>
<feature type="strand" evidence="33">
    <location>
        <begin position="820"/>
        <end position="822"/>
    </location>
</feature>
<feature type="strand" evidence="34">
    <location>
        <begin position="825"/>
        <end position="827"/>
    </location>
</feature>
<feature type="strand" evidence="33">
    <location>
        <begin position="828"/>
        <end position="830"/>
    </location>
</feature>
<feature type="strand" evidence="38">
    <location>
        <begin position="831"/>
        <end position="833"/>
    </location>
</feature>
<feature type="helix" evidence="33">
    <location>
        <begin position="835"/>
        <end position="839"/>
    </location>
</feature>
<feature type="strand" evidence="17">
    <location>
        <begin position="840"/>
        <end position="842"/>
    </location>
</feature>
<feature type="strand" evidence="33">
    <location>
        <begin position="843"/>
        <end position="846"/>
    </location>
</feature>
<feature type="strand" evidence="33">
    <location>
        <begin position="853"/>
        <end position="858"/>
    </location>
</feature>
<feature type="strand" evidence="25">
    <location>
        <begin position="860"/>
        <end position="863"/>
    </location>
</feature>
<feature type="helix" evidence="33">
    <location>
        <begin position="866"/>
        <end position="874"/>
    </location>
</feature>
<feature type="strand" evidence="33">
    <location>
        <begin position="880"/>
        <end position="882"/>
    </location>
</feature>
<feature type="turn" evidence="32">
    <location>
        <begin position="885"/>
        <end position="887"/>
    </location>
</feature>
<feature type="strand" evidence="33">
    <location>
        <begin position="891"/>
        <end position="895"/>
    </location>
</feature>
<feature type="helix" evidence="33">
    <location>
        <begin position="896"/>
        <end position="899"/>
    </location>
</feature>
<feature type="turn" evidence="33">
    <location>
        <begin position="903"/>
        <end position="905"/>
    </location>
</feature>
<feature type="strand" evidence="33">
    <location>
        <begin position="906"/>
        <end position="908"/>
    </location>
</feature>
<feature type="helix" evidence="33">
    <location>
        <begin position="915"/>
        <end position="924"/>
    </location>
</feature>
<feature type="helix" evidence="33">
    <location>
        <begin position="925"/>
        <end position="929"/>
    </location>
</feature>
<feature type="helix" evidence="42">
    <location>
        <begin position="933"/>
        <end position="936"/>
    </location>
</feature>
<feature type="helix" evidence="15">
    <location>
        <begin position="945"/>
        <end position="948"/>
    </location>
</feature>
<feature type="strand" evidence="16">
    <location>
        <begin position="949"/>
        <end position="951"/>
    </location>
</feature>
<feature type="strand" evidence="16">
    <location>
        <begin position="956"/>
        <end position="962"/>
    </location>
</feature>
<feature type="strand" evidence="16">
    <location>
        <begin position="965"/>
        <end position="967"/>
    </location>
</feature>
<feature type="strand" evidence="33">
    <location>
        <begin position="969"/>
        <end position="971"/>
    </location>
</feature>
<feature type="strand" evidence="16">
    <location>
        <begin position="973"/>
        <end position="975"/>
    </location>
</feature>
<feature type="strand" evidence="18">
    <location>
        <begin position="977"/>
        <end position="979"/>
    </location>
</feature>
<feature type="strand" evidence="16">
    <location>
        <begin position="981"/>
        <end position="985"/>
    </location>
</feature>
<feature type="strand" evidence="33">
    <location>
        <begin position="987"/>
        <end position="989"/>
    </location>
</feature>
<feature type="strand" evidence="16">
    <location>
        <begin position="991"/>
        <end position="996"/>
    </location>
</feature>
<feature type="strand" evidence="16">
    <location>
        <begin position="1002"/>
        <end position="1005"/>
    </location>
</feature>
<feature type="strand" evidence="29">
    <location>
        <begin position="1007"/>
        <end position="1011"/>
    </location>
</feature>
<feature type="strand" evidence="37">
    <location>
        <begin position="1013"/>
        <end position="1015"/>
    </location>
</feature>
<feature type="strand" evidence="16">
    <location>
        <begin position="1016"/>
        <end position="1019"/>
    </location>
</feature>
<feature type="strand" evidence="16">
    <location>
        <begin position="1022"/>
        <end position="1028"/>
    </location>
</feature>
<feature type="strand" evidence="22">
    <location>
        <begin position="1030"/>
        <end position="1032"/>
    </location>
</feature>
<feature type="strand" evidence="16">
    <location>
        <begin position="1033"/>
        <end position="1039"/>
    </location>
</feature>
<feature type="turn" evidence="16">
    <location>
        <begin position="1043"/>
        <end position="1045"/>
    </location>
</feature>
<feature type="strand" evidence="16">
    <location>
        <begin position="1046"/>
        <end position="1049"/>
    </location>
</feature>
<feature type="turn" evidence="33">
    <location>
        <begin position="1052"/>
        <end position="1054"/>
    </location>
</feature>
<feature type="strand" evidence="16">
    <location>
        <begin position="1058"/>
        <end position="1061"/>
    </location>
</feature>
<feature type="helix" evidence="16">
    <location>
        <begin position="1064"/>
        <end position="1066"/>
    </location>
</feature>
<feature type="helix" evidence="16">
    <location>
        <begin position="1071"/>
        <end position="1073"/>
    </location>
</feature>
<feature type="strand" evidence="16">
    <location>
        <begin position="1077"/>
        <end position="1081"/>
    </location>
</feature>
<feature type="strand" evidence="22">
    <location>
        <begin position="1085"/>
        <end position="1087"/>
    </location>
</feature>
<feature type="strand" evidence="16">
    <location>
        <begin position="1093"/>
        <end position="1096"/>
    </location>
</feature>
<feature type="strand" evidence="16">
    <location>
        <begin position="1098"/>
        <end position="1100"/>
    </location>
</feature>
<feature type="strand" evidence="33">
    <location>
        <begin position="1103"/>
        <end position="1107"/>
    </location>
</feature>
<feature type="strand" evidence="40">
    <location>
        <begin position="1113"/>
        <end position="1115"/>
    </location>
</feature>
<feature type="strand" evidence="32">
    <location>
        <begin position="1117"/>
        <end position="1119"/>
    </location>
</feature>
<feature type="strand" evidence="16">
    <location>
        <begin position="1120"/>
        <end position="1125"/>
    </location>
</feature>
<feature type="strand" evidence="19">
    <location>
        <begin position="1135"/>
        <end position="1137"/>
    </location>
</feature>
<feature type="helix" evidence="33">
    <location>
        <begin position="1138"/>
        <end position="1145"/>
    </location>
</feature>
<feature type="strand" evidence="33">
    <location>
        <begin position="1161"/>
        <end position="1167"/>
    </location>
</feature>
<feature type="strand" evidence="33">
    <location>
        <begin position="1169"/>
        <end position="1172"/>
    </location>
</feature>
<feature type="strand" evidence="33">
    <location>
        <begin position="1174"/>
        <end position="1178"/>
    </location>
</feature>
<feature type="strand" evidence="21">
    <location>
        <begin position="1180"/>
        <end position="1182"/>
    </location>
</feature>
<feature type="strand" evidence="33">
    <location>
        <begin position="1186"/>
        <end position="1189"/>
    </location>
</feature>
<feature type="strand" evidence="32">
    <location>
        <begin position="1192"/>
        <end position="1194"/>
    </location>
</feature>
<feature type="strand" evidence="28">
    <location>
        <begin position="1196"/>
        <end position="1198"/>
    </location>
</feature>
<feature type="strand" evidence="21">
    <location>
        <begin position="1200"/>
        <end position="1204"/>
    </location>
</feature>
<feature type="strand" evidence="33">
    <location>
        <begin position="1209"/>
        <end position="1211"/>
    </location>
</feature>
<feature type="helix" evidence="33">
    <location>
        <begin position="1217"/>
        <end position="1224"/>
    </location>
</feature>
<feature type="helix" evidence="33">
    <location>
        <begin position="1226"/>
        <end position="1243"/>
    </location>
</feature>
<feature type="helix" evidence="33">
    <location>
        <begin position="1250"/>
        <end position="1260"/>
    </location>
</feature>
<feature type="strand" evidence="33">
    <location>
        <begin position="1263"/>
        <end position="1268"/>
    </location>
</feature>
<feature type="strand" evidence="33">
    <location>
        <begin position="1272"/>
        <end position="1274"/>
    </location>
</feature>
<feature type="strand" evidence="17">
    <location>
        <begin position="1276"/>
        <end position="1278"/>
    </location>
</feature>
<feature type="strand" evidence="33">
    <location>
        <begin position="1279"/>
        <end position="1281"/>
    </location>
</feature>
<feature type="helix" evidence="33">
    <location>
        <begin position="1282"/>
        <end position="1295"/>
    </location>
</feature>
<feature type="helix" evidence="24">
    <location>
        <begin position="1296"/>
        <end position="1298"/>
    </location>
</feature>
<feature type="strand" evidence="33">
    <location>
        <begin position="1301"/>
        <end position="1305"/>
    </location>
</feature>
<feature type="helix" evidence="33">
    <location>
        <begin position="1309"/>
        <end position="1314"/>
    </location>
</feature>
<feature type="strand" evidence="38">
    <location>
        <begin position="1315"/>
        <end position="1317"/>
    </location>
</feature>
<feature type="helix" evidence="33">
    <location>
        <begin position="1319"/>
        <end position="1325"/>
    </location>
</feature>
<feature type="helix" evidence="33">
    <location>
        <begin position="1328"/>
        <end position="1338"/>
    </location>
</feature>
<feature type="strand" evidence="33">
    <location>
        <begin position="1341"/>
        <end position="1344"/>
    </location>
</feature>
<feature type="helix" evidence="33">
    <location>
        <begin position="1347"/>
        <end position="1352"/>
    </location>
</feature>
<feature type="helix" evidence="33">
    <location>
        <begin position="1360"/>
        <end position="1362"/>
    </location>
</feature>
<feature type="helix" evidence="33">
    <location>
        <begin position="1363"/>
        <end position="1371"/>
    </location>
</feature>
<feature type="turn" evidence="36">
    <location>
        <begin position="1373"/>
        <end position="1375"/>
    </location>
</feature>
<sequence length="1407" mass="155160">MKDLLKFLKAQTKTEEFDAIKIALASPDMIRSWSFGEVKKPETINYRTFKPERDGLFCARIFGPVKDYECLCGKYKRLKHRGVICEKCGVEVTQTKVRRERMGHIELASPTAHIWFLKSLPSRIGLLLDMPLRDIERVLYFESYVVIEGGMTNLERQQILTEEQYLDALEEFGDEFDAKMGAEAIQALLKSMDLEQECEQLREELNETNSETKRKKLTKRIKLLEAFVQSGNKPEWMILTVLPVLPPDLRPLVPLDGGRFATSDLNDLYRRVINRNNRLKRLLDLAAPDIIVRNEKRMLQEAVDALLDNGRRGRAITGSNKRPLKSLADMIKGKQGRFRQNLLGKRVDYSGRSVITVGPYLRLHQCGLPKKMALELFKPFIYGKLELRGLATTIKAAKKMVEREEAVVWDILDEVIREHPVLLNRAPTLHRLGIQAFEPVLIEGKAIQLHPLVCAAYNADFDGDQMAVHVPLTLEAQLEARALMMSTNNILSPANGEPIIVPSQDVVLGLYYMTRDCVNAKGEGMVLTGPKEAERLYRSGLASLHARVKVRITEYEKDANGELVAKTSLKDTTVGRAILWMIVPKGLPYSIVNQALGKKAISKMLNTCYRILGLKPTVIFADQIMYTGFAYAARSGASVGIDDMVIPEKKHEIISEAEAEVAEIQEQFQSGLVTAGERYNKVIDIWAAANDRVSKAMMDNLQTETVINRDGQEEKQVSFNSIYMMADSGARGSAAQIRQLAGMRGLMAKPDGSIIETPITANFREGLNVLQYFISTHGARKGLADTALKTANSGYLTRRLVDVAQDLVVTEDDCGTHEGIMMTPVIEGGDVKEPLRDRVLGRVTAEDVLKPGTADILVPRNTLLHEQWCDLLEENSVDAVKVRSVVSCDTDFGVCAHCYGRDLARGHIINKGEAIGVIAAQSIGEPGTQLTMRTFHIGGAASRAAAESSIQVKNKGSIKLSNVKSVVNSSGKLVITSRNTELKLIDEFGRTKESYKVPYGAVLAKGDGEQVAGGETVANWDPHTMPVITEVSGFVRFTDMIDGQTITRQTDELTGLSSLVVLDSAERTAGGKDLRPALKIVDAQGNDVLIPGTDMPAQYFLPGKAIVQLEDGVQISSGDTLARIPQESGGTKDITGGLPRVADLFEARRPKEPAILAEISGIVSFGKETKGKRRLVITPVDGSDPYEEMIPKWRQLNVFEGERVERGDVISDGPEAPHDILRLRGVHAVTRYIVNEVQDVYRLQGVKINDKHIEVIVRQMLRKATIVNAGSSDFLEGEQVEYSRVKIANRELEANGKVGATYSRDLLGITKASLATESFISAASFQETTRVLTEAAVAGKRDELRGLKENVIVGRLIPAGTGYAYHQDRMRRRAAGEAPAAPQVTAEDASASLAELLNAGLGGSDNE</sequence>
<dbReference type="EC" id="2.7.7.6" evidence="1"/>
<dbReference type="EMBL" id="V00339">
    <property type="protein sequence ID" value="CAA23626.1"/>
    <property type="molecule type" value="Genomic_DNA"/>
</dbReference>
<dbReference type="EMBL" id="U00006">
    <property type="protein sequence ID" value="AAC43086.1"/>
    <property type="molecule type" value="Genomic_DNA"/>
</dbReference>
<dbReference type="EMBL" id="U00096">
    <property type="protein sequence ID" value="AAC76962.1"/>
    <property type="molecule type" value="Genomic_DNA"/>
</dbReference>
<dbReference type="EMBL" id="AP009048">
    <property type="protein sequence ID" value="BAE77332.1"/>
    <property type="molecule type" value="Genomic_DNA"/>
</dbReference>
<dbReference type="EMBL" id="M38293">
    <property type="protein sequence ID" value="AAA24582.1"/>
    <property type="molecule type" value="Genomic_DNA"/>
</dbReference>
<dbReference type="EMBL" id="M38303">
    <property type="protein sequence ID" value="AAA24584.1"/>
    <property type="molecule type" value="Genomic_DNA"/>
</dbReference>
<dbReference type="EMBL" id="V00340">
    <property type="protein sequence ID" value="CAA23628.1"/>
    <property type="molecule type" value="Genomic_DNA"/>
</dbReference>
<dbReference type="EMBL" id="M38305">
    <property type="protein sequence ID" value="AAA24586.1"/>
    <property type="molecule type" value="Genomic_DNA"/>
</dbReference>
<dbReference type="EMBL" id="M38288">
    <property type="protein sequence ID" value="AAA24408.1"/>
    <property type="molecule type" value="Genomic_DNA"/>
</dbReference>
<dbReference type="PIR" id="A00695">
    <property type="entry name" value="RNECC"/>
</dbReference>
<dbReference type="RefSeq" id="NP_418415.1">
    <property type="nucleotide sequence ID" value="NC_000913.3"/>
</dbReference>
<dbReference type="RefSeq" id="WP_000653944.1">
    <property type="nucleotide sequence ID" value="NZ_STEB01000045.1"/>
</dbReference>
<dbReference type="PDB" id="2AUK">
    <property type="method" value="X-ray"/>
    <property type="resolution" value="2.30 A"/>
    <property type="chains" value="A/B/C/D/E=944-1129"/>
</dbReference>
<dbReference type="PDB" id="2LMC">
    <property type="method" value="NMR"/>
    <property type="chains" value="B=1151-1213"/>
</dbReference>
<dbReference type="PDB" id="3IYD">
    <property type="method" value="EM"/>
    <property type="chains" value="D=1-1407"/>
</dbReference>
<dbReference type="PDB" id="3LU0">
    <property type="method" value="EM"/>
    <property type="chains" value="D=1-1407"/>
</dbReference>
<dbReference type="PDB" id="4IQZ">
    <property type="method" value="X-ray"/>
    <property type="resolution" value="2.10 A"/>
    <property type="chains" value="A/B/C/D/E=932-1141"/>
</dbReference>
<dbReference type="PDB" id="4JK1">
    <property type="method" value="X-ray"/>
    <property type="resolution" value="3.90 A"/>
    <property type="chains" value="D/I=1-1407"/>
</dbReference>
<dbReference type="PDB" id="4JK2">
    <property type="method" value="X-ray"/>
    <property type="resolution" value="4.20 A"/>
    <property type="chains" value="D/I=1-1407"/>
</dbReference>
<dbReference type="PDB" id="4KMU">
    <property type="method" value="X-ray"/>
    <property type="resolution" value="3.85 A"/>
    <property type="chains" value="D/I=1-1407"/>
</dbReference>
<dbReference type="PDB" id="4KN4">
    <property type="method" value="X-ray"/>
    <property type="resolution" value="3.96 A"/>
    <property type="chains" value="D/I=1-1407"/>
</dbReference>
<dbReference type="PDB" id="4KN7">
    <property type="method" value="X-ray"/>
    <property type="resolution" value="3.69 A"/>
    <property type="chains" value="D/I=1-1407"/>
</dbReference>
<dbReference type="PDB" id="4MEX">
    <property type="method" value="X-ray"/>
    <property type="resolution" value="3.90 A"/>
    <property type="chains" value="D/J=1-1407"/>
</dbReference>
<dbReference type="PDB" id="4MEY">
    <property type="method" value="X-ray"/>
    <property type="resolution" value="3.95 A"/>
    <property type="chains" value="D/J=1-1407"/>
</dbReference>
<dbReference type="PDB" id="4XSX">
    <property type="method" value="X-ray"/>
    <property type="resolution" value="3.71 A"/>
    <property type="chains" value="D/J=1-1407"/>
</dbReference>
<dbReference type="PDB" id="4XSY">
    <property type="method" value="X-ray"/>
    <property type="resolution" value="4.01 A"/>
    <property type="chains" value="D/J=1-1407"/>
</dbReference>
<dbReference type="PDB" id="4XSZ">
    <property type="method" value="X-ray"/>
    <property type="resolution" value="3.68 A"/>
    <property type="chains" value="D/J=1-1407"/>
</dbReference>
<dbReference type="PDB" id="4YG2">
    <property type="method" value="X-ray"/>
    <property type="resolution" value="3.70 A"/>
    <property type="chains" value="D/J=1-1407"/>
</dbReference>
<dbReference type="PDB" id="4YLN">
    <property type="method" value="X-ray"/>
    <property type="resolution" value="5.50 A"/>
    <property type="chains" value="D/J/P=1-1407"/>
</dbReference>
<dbReference type="PDB" id="4YLO">
    <property type="method" value="X-ray"/>
    <property type="resolution" value="6.00 A"/>
    <property type="chains" value="D/J/P=1-1407"/>
</dbReference>
<dbReference type="PDB" id="4YLP">
    <property type="method" value="X-ray"/>
    <property type="resolution" value="5.50 A"/>
    <property type="chains" value="D/J/P=1-1407"/>
</dbReference>
<dbReference type="PDB" id="4ZH2">
    <property type="method" value="X-ray"/>
    <property type="resolution" value="4.20 A"/>
    <property type="chains" value="D/J=1-1407"/>
</dbReference>
<dbReference type="PDB" id="4ZH3">
    <property type="method" value="X-ray"/>
    <property type="resolution" value="4.08 A"/>
    <property type="chains" value="D/J=1-1407"/>
</dbReference>
<dbReference type="PDB" id="4ZH4">
    <property type="method" value="X-ray"/>
    <property type="resolution" value="3.99 A"/>
    <property type="chains" value="D/J=1-1407"/>
</dbReference>
<dbReference type="PDB" id="5EZK">
    <property type="method" value="X-ray"/>
    <property type="resolution" value="8.50 A"/>
    <property type="chains" value="D=1-1407"/>
</dbReference>
<dbReference type="PDB" id="5IPL">
    <property type="method" value="X-ray"/>
    <property type="resolution" value="3.60 A"/>
    <property type="chains" value="D=1-1407"/>
</dbReference>
<dbReference type="PDB" id="5IPM">
    <property type="method" value="X-ray"/>
    <property type="resolution" value="4.20 A"/>
    <property type="chains" value="D=1-1407"/>
</dbReference>
<dbReference type="PDB" id="5IPN">
    <property type="method" value="X-ray"/>
    <property type="resolution" value="4.61 A"/>
    <property type="chains" value="D=1-1407"/>
</dbReference>
<dbReference type="PDB" id="5MS0">
    <property type="method" value="EM"/>
    <property type="resolution" value="9.80 A"/>
    <property type="chains" value="D=1-1407"/>
</dbReference>
<dbReference type="PDB" id="5MY1">
    <property type="method" value="EM"/>
    <property type="resolution" value="7.60 A"/>
    <property type="chains" value="Y=1-1407"/>
</dbReference>
<dbReference type="PDB" id="5NSR">
    <property type="method" value="EM"/>
    <property type="resolution" value="3.80 A"/>
    <property type="chains" value="D=1-1407"/>
</dbReference>
<dbReference type="PDB" id="5NSS">
    <property type="method" value="EM"/>
    <property type="resolution" value="5.80 A"/>
    <property type="chains" value="D=1-1407"/>
</dbReference>
<dbReference type="PDB" id="5NWT">
    <property type="method" value="X-ray"/>
    <property type="resolution" value="3.76 A"/>
    <property type="chains" value="D=1-1407"/>
</dbReference>
<dbReference type="PDB" id="5UAC">
    <property type="method" value="X-ray"/>
    <property type="resolution" value="3.80 A"/>
    <property type="chains" value="D/J=1-1407"/>
</dbReference>
<dbReference type="PDB" id="5UAG">
    <property type="method" value="X-ray"/>
    <property type="resolution" value="3.40 A"/>
    <property type="chains" value="D/J=1-1407"/>
</dbReference>
<dbReference type="PDB" id="5UAH">
    <property type="method" value="X-ray"/>
    <property type="resolution" value="4.10 A"/>
    <property type="chains" value="D/J=1-1407"/>
</dbReference>
<dbReference type="PDB" id="5UAJ">
    <property type="method" value="X-ray"/>
    <property type="resolution" value="3.92 A"/>
    <property type="chains" value="D/J=1-1407"/>
</dbReference>
<dbReference type="PDB" id="5UAL">
    <property type="method" value="X-ray"/>
    <property type="resolution" value="3.89 A"/>
    <property type="chains" value="D/J=1-1407"/>
</dbReference>
<dbReference type="PDB" id="5UAQ">
    <property type="method" value="X-ray"/>
    <property type="resolution" value="3.60 A"/>
    <property type="chains" value="D/J=1-1407"/>
</dbReference>
<dbReference type="PDB" id="5UI8">
    <property type="method" value="X-ray"/>
    <property type="resolution" value="3.76 A"/>
    <property type="chains" value="J=1-1407"/>
</dbReference>
<dbReference type="PDB" id="5VSW">
    <property type="method" value="X-ray"/>
    <property type="resolution" value="4.29 A"/>
    <property type="chains" value="D/J=1-1407"/>
</dbReference>
<dbReference type="PDB" id="5VT0">
    <property type="method" value="EM"/>
    <property type="resolution" value="3.78 A"/>
    <property type="chains" value="J=1-1407"/>
</dbReference>
<dbReference type="PDB" id="5W1S">
    <property type="method" value="X-ray"/>
    <property type="resolution" value="3.81 A"/>
    <property type="chains" value="D/J=1-1407"/>
</dbReference>
<dbReference type="PDB" id="5W1T">
    <property type="method" value="X-ray"/>
    <property type="resolution" value="4.50 A"/>
    <property type="chains" value="D/J=1-1407"/>
</dbReference>
<dbReference type="PDB" id="6ALF">
    <property type="method" value="EM"/>
    <property type="resolution" value="4.10 A"/>
    <property type="chains" value="J=1-1407"/>
</dbReference>
<dbReference type="PDB" id="6ALG">
    <property type="method" value="EM"/>
    <property type="resolution" value="3.70 A"/>
    <property type="chains" value="J=1-1407"/>
</dbReference>
<dbReference type="PDB" id="6ALH">
    <property type="method" value="EM"/>
    <property type="resolution" value="4.40 A"/>
    <property type="chains" value="J=1-1407"/>
</dbReference>
<dbReference type="PDB" id="6ASX">
    <property type="method" value="EM"/>
    <property type="resolution" value="3.80 A"/>
    <property type="chains" value="J=1-1407"/>
</dbReference>
<dbReference type="PDB" id="6AWB">
    <property type="method" value="EM"/>
    <property type="resolution" value="6.70 A"/>
    <property type="chains" value="04=8-1376"/>
</dbReference>
<dbReference type="PDB" id="6AWC">
    <property type="method" value="EM"/>
    <property type="resolution" value="7.90 A"/>
    <property type="chains" value="04=8-1376"/>
</dbReference>
<dbReference type="PDB" id="6AWD">
    <property type="method" value="EM"/>
    <property type="resolution" value="8.10 A"/>
    <property type="chains" value="04=8-1376"/>
</dbReference>
<dbReference type="PDB" id="6B6H">
    <property type="method" value="EM"/>
    <property type="resolution" value="3.90 A"/>
    <property type="chains" value="D=1-1407"/>
</dbReference>
<dbReference type="PDB" id="6BJS">
    <property type="method" value="EM"/>
    <property type="resolution" value="5.50 A"/>
    <property type="chains" value="J=1-1407"/>
</dbReference>
<dbReference type="PDB" id="6BYU">
    <property type="method" value="X-ray"/>
    <property type="resolution" value="3.60 A"/>
    <property type="chains" value="D/J=1-1407"/>
</dbReference>
<dbReference type="PDB" id="6C6S">
    <property type="method" value="EM"/>
    <property type="resolution" value="3.70 A"/>
    <property type="chains" value="J=1-1407"/>
</dbReference>
<dbReference type="PDB" id="6C6T">
    <property type="method" value="EM"/>
    <property type="resolution" value="3.50 A"/>
    <property type="chains" value="J=1-1407"/>
</dbReference>
<dbReference type="PDB" id="6C6U">
    <property type="method" value="EM"/>
    <property type="resolution" value="3.70 A"/>
    <property type="chains" value="J=1-1407"/>
</dbReference>
<dbReference type="PDB" id="6C9Y">
    <property type="method" value="EM"/>
    <property type="resolution" value="4.25 A"/>
    <property type="chains" value="D=1-1407"/>
</dbReference>
<dbReference type="PDB" id="6CA0">
    <property type="method" value="EM"/>
    <property type="resolution" value="5.75 A"/>
    <property type="chains" value="D=1-1407"/>
</dbReference>
<dbReference type="PDB" id="6CUX">
    <property type="method" value="X-ray"/>
    <property type="resolution" value="4.10 A"/>
    <property type="chains" value="D/J=1-1407"/>
</dbReference>
<dbReference type="PDB" id="6FLP">
    <property type="method" value="EM"/>
    <property type="resolution" value="4.10 A"/>
    <property type="chains" value="D=1-1407"/>
</dbReference>
<dbReference type="PDB" id="6FLQ">
    <property type="method" value="EM"/>
    <property type="resolution" value="4.10 A"/>
    <property type="chains" value="D=1-1407"/>
</dbReference>
<dbReference type="PDB" id="6GFW">
    <property type="method" value="EM"/>
    <property type="resolution" value="3.70 A"/>
    <property type="chains" value="D=1-1407"/>
</dbReference>
<dbReference type="PDB" id="6GH5">
    <property type="method" value="EM"/>
    <property type="resolution" value="3.40 A"/>
    <property type="chains" value="D=1-1407"/>
</dbReference>
<dbReference type="PDB" id="6GH6">
    <property type="method" value="EM"/>
    <property type="resolution" value="4.10 A"/>
    <property type="chains" value="D=1-1407"/>
</dbReference>
<dbReference type="PDB" id="6GOV">
    <property type="method" value="EM"/>
    <property type="resolution" value="3.70 A"/>
    <property type="chains" value="Y=1-1407"/>
</dbReference>
<dbReference type="PDB" id="6JBQ">
    <property type="method" value="EM"/>
    <property type="resolution" value="4.02 A"/>
    <property type="chains" value="D=1-1407"/>
</dbReference>
<dbReference type="PDB" id="6JNX">
    <property type="method" value="EM"/>
    <property type="resolution" value="4.08 A"/>
    <property type="chains" value="D=1-1407"/>
</dbReference>
<dbReference type="PDB" id="6K4Y">
    <property type="method" value="EM"/>
    <property type="resolution" value="3.79 A"/>
    <property type="chains" value="D=1-1407"/>
</dbReference>
<dbReference type="PDB" id="6KJ6">
    <property type="method" value="EM"/>
    <property type="resolution" value="3.80 A"/>
    <property type="chains" value="D=1-1407"/>
</dbReference>
<dbReference type="PDB" id="6LDI">
    <property type="method" value="EM"/>
    <property type="resolution" value="3.69 A"/>
    <property type="chains" value="D=1-1407"/>
</dbReference>
<dbReference type="PDB" id="6N4C">
    <property type="method" value="EM"/>
    <property type="resolution" value="17.00 A"/>
    <property type="chains" value="D=15-1376"/>
</dbReference>
<dbReference type="PDB" id="6N57">
    <property type="method" value="EM"/>
    <property type="resolution" value="3.70 A"/>
    <property type="chains" value="J=2-1407"/>
</dbReference>
<dbReference type="PDB" id="6N58">
    <property type="method" value="EM"/>
    <property type="resolution" value="3.78 A"/>
    <property type="chains" value="J=2-1407"/>
</dbReference>
<dbReference type="PDB" id="6N60">
    <property type="method" value="X-ray"/>
    <property type="resolution" value="3.68 A"/>
    <property type="chains" value="D=2-1407"/>
</dbReference>
<dbReference type="PDB" id="6N61">
    <property type="method" value="X-ray"/>
    <property type="resolution" value="3.25 A"/>
    <property type="chains" value="D=2-1407"/>
</dbReference>
<dbReference type="PDB" id="6N62">
    <property type="method" value="X-ray"/>
    <property type="resolution" value="3.80 A"/>
    <property type="chains" value="D=2-1407"/>
</dbReference>
<dbReference type="PDB" id="6OMF">
    <property type="method" value="EM"/>
    <property type="resolution" value="3.26 A"/>
    <property type="chains" value="D=1-1407"/>
</dbReference>
<dbReference type="PDB" id="6P18">
    <property type="method" value="EM"/>
    <property type="resolution" value="3.50 A"/>
    <property type="chains" value="D=1-1407"/>
</dbReference>
<dbReference type="PDB" id="6P19">
    <property type="method" value="EM"/>
    <property type="resolution" value="3.80 A"/>
    <property type="chains" value="D=1-1407"/>
</dbReference>
<dbReference type="PDB" id="6P1K">
    <property type="method" value="EM"/>
    <property type="resolution" value="4.05 A"/>
    <property type="chains" value="J=2-1407"/>
</dbReference>
<dbReference type="PDB" id="6PB4">
    <property type="method" value="EM"/>
    <property type="resolution" value="4.35 A"/>
    <property type="chains" value="D=1-1407"/>
</dbReference>
<dbReference type="PDB" id="6PB5">
    <property type="method" value="EM"/>
    <property type="resolution" value="4.52 A"/>
    <property type="chains" value="D=1-1407"/>
</dbReference>
<dbReference type="PDB" id="6PB6">
    <property type="method" value="EM"/>
    <property type="resolution" value="4.29 A"/>
    <property type="chains" value="D=1-1407"/>
</dbReference>
<dbReference type="PDB" id="6PMI">
    <property type="method" value="EM"/>
    <property type="resolution" value="3.86 A"/>
    <property type="chains" value="D=1-1407"/>
</dbReference>
<dbReference type="PDB" id="6PMJ">
    <property type="method" value="EM"/>
    <property type="resolution" value="3.91 A"/>
    <property type="chains" value="D=1-1407"/>
</dbReference>
<dbReference type="PDB" id="6PSQ">
    <property type="method" value="EM"/>
    <property type="resolution" value="3.40 A"/>
    <property type="chains" value="J=2-1407"/>
</dbReference>
<dbReference type="PDB" id="6PSR">
    <property type="method" value="EM"/>
    <property type="resolution" value="3.40 A"/>
    <property type="chains" value="J=2-1407"/>
</dbReference>
<dbReference type="PDB" id="6PSS">
    <property type="method" value="EM"/>
    <property type="resolution" value="3.50 A"/>
    <property type="chains" value="J=2-1407"/>
</dbReference>
<dbReference type="PDB" id="6PST">
    <property type="method" value="EM"/>
    <property type="resolution" value="3.00 A"/>
    <property type="chains" value="J=2-1407"/>
</dbReference>
<dbReference type="PDB" id="6PSU">
    <property type="method" value="EM"/>
    <property type="resolution" value="3.90 A"/>
    <property type="chains" value="J=2-1407"/>
</dbReference>
<dbReference type="PDB" id="6PSV">
    <property type="method" value="EM"/>
    <property type="resolution" value="3.50 A"/>
    <property type="chains" value="J=2-1407"/>
</dbReference>
<dbReference type="PDB" id="6PSW">
    <property type="method" value="EM"/>
    <property type="resolution" value="3.70 A"/>
    <property type="chains" value="J=2-1407"/>
</dbReference>
<dbReference type="PDB" id="6R9B">
    <property type="method" value="EM"/>
    <property type="resolution" value="3.80 A"/>
    <property type="chains" value="D=1-1407"/>
</dbReference>
<dbReference type="PDB" id="6R9G">
    <property type="method" value="EM"/>
    <property type="resolution" value="3.70 A"/>
    <property type="chains" value="D=1-1407"/>
</dbReference>
<dbReference type="PDB" id="6RH3">
    <property type="method" value="EM"/>
    <property type="resolution" value="3.60 A"/>
    <property type="chains" value="D=1-1407"/>
</dbReference>
<dbReference type="PDB" id="6RI7">
    <property type="method" value="EM"/>
    <property type="resolution" value="3.90 A"/>
    <property type="chains" value="D=1-1407"/>
</dbReference>
<dbReference type="PDB" id="6RI9">
    <property type="method" value="EM"/>
    <property type="resolution" value="3.70 A"/>
    <property type="chains" value="D=1-1407"/>
</dbReference>
<dbReference type="PDB" id="6RIN">
    <property type="method" value="EM"/>
    <property type="resolution" value="3.70 A"/>
    <property type="chains" value="D=1-1407"/>
</dbReference>
<dbReference type="PDB" id="6RIP">
    <property type="method" value="EM"/>
    <property type="resolution" value="3.40 A"/>
    <property type="chains" value="D=1-1407"/>
</dbReference>
<dbReference type="PDB" id="6TQN">
    <property type="method" value="EM"/>
    <property type="resolution" value="3.80 A"/>
    <property type="chains" value="Y=1-1407"/>
</dbReference>
<dbReference type="PDB" id="6TQO">
    <property type="method" value="EM"/>
    <property type="resolution" value="4.00 A"/>
    <property type="chains" value="Y=1-1407"/>
</dbReference>
<dbReference type="PDB" id="6UTV">
    <property type="method" value="X-ray"/>
    <property type="resolution" value="3.45 A"/>
    <property type="chains" value="DDD=1-1407"/>
</dbReference>
<dbReference type="PDB" id="6UTW">
    <property type="method" value="X-ray"/>
    <property type="resolution" value="3.85 A"/>
    <property type="chains" value="DDD=1-1407"/>
</dbReference>
<dbReference type="PDB" id="6UTX">
    <property type="method" value="X-ray"/>
    <property type="resolution" value="4.05 A"/>
    <property type="chains" value="DDD=1-1407"/>
</dbReference>
<dbReference type="PDB" id="6UTY">
    <property type="method" value="X-ray"/>
    <property type="resolution" value="4.15 A"/>
    <property type="chains" value="DDD=1-1407"/>
</dbReference>
<dbReference type="PDB" id="6UTZ">
    <property type="method" value="X-ray"/>
    <property type="resolution" value="3.80 A"/>
    <property type="chains" value="DDD=1-1407"/>
</dbReference>
<dbReference type="PDB" id="6UU0">
    <property type="method" value="X-ray"/>
    <property type="resolution" value="3.90 A"/>
    <property type="chains" value="DDD=1-1407"/>
</dbReference>
<dbReference type="PDB" id="6UU1">
    <property type="method" value="X-ray"/>
    <property type="resolution" value="4.10 A"/>
    <property type="chains" value="DDD=1-1407"/>
</dbReference>
<dbReference type="PDB" id="6UU2">
    <property type="method" value="X-ray"/>
    <property type="resolution" value="4.40 A"/>
    <property type="chains" value="DDD=1-1407"/>
</dbReference>
<dbReference type="PDB" id="6UU3">
    <property type="method" value="X-ray"/>
    <property type="resolution" value="4.00 A"/>
    <property type="chains" value="DDD=1-1407"/>
</dbReference>
<dbReference type="PDB" id="6UU4">
    <property type="method" value="X-ray"/>
    <property type="resolution" value="4.30 A"/>
    <property type="chains" value="DDD=1-1407"/>
</dbReference>
<dbReference type="PDB" id="6UU5">
    <property type="method" value="X-ray"/>
    <property type="resolution" value="5.40 A"/>
    <property type="chains" value="DDD=1-1407"/>
</dbReference>
<dbReference type="PDB" id="6UU6">
    <property type="method" value="X-ray"/>
    <property type="resolution" value="4.20 A"/>
    <property type="chains" value="DDD=1-1407"/>
</dbReference>
<dbReference type="PDB" id="6UU7">
    <property type="method" value="X-ray"/>
    <property type="resolution" value="4.40 A"/>
    <property type="chains" value="DDD=1-1407"/>
</dbReference>
<dbReference type="PDB" id="6UU8">
    <property type="method" value="X-ray"/>
    <property type="resolution" value="4.40 A"/>
    <property type="chains" value="DDD=1-1407"/>
</dbReference>
<dbReference type="PDB" id="6UU9">
    <property type="method" value="X-ray"/>
    <property type="resolution" value="5.40 A"/>
    <property type="chains" value="DDD=1-1407"/>
</dbReference>
<dbReference type="PDB" id="6UUA">
    <property type="method" value="X-ray"/>
    <property type="resolution" value="4.00 A"/>
    <property type="chains" value="DDD=1-1407"/>
</dbReference>
<dbReference type="PDB" id="6UUB">
    <property type="method" value="X-ray"/>
    <property type="resolution" value="3.96 A"/>
    <property type="chains" value="DDD=1-1407"/>
</dbReference>
<dbReference type="PDB" id="6UUC">
    <property type="method" value="X-ray"/>
    <property type="resolution" value="4.10 A"/>
    <property type="chains" value="DDD=1-1407"/>
</dbReference>
<dbReference type="PDB" id="6VJS">
    <property type="method" value="X-ray"/>
    <property type="resolution" value="4.02 A"/>
    <property type="chains" value="D/I=1-1407"/>
</dbReference>
<dbReference type="PDB" id="6VU3">
    <property type="method" value="EM"/>
    <property type="resolution" value="3.70 A"/>
    <property type="chains" value="AE=1-1407"/>
</dbReference>
<dbReference type="PDB" id="6VYQ">
    <property type="method" value="EM"/>
    <property type="resolution" value="3.70 A"/>
    <property type="chains" value="AE=1-1407"/>
</dbReference>
<dbReference type="PDB" id="6VYR">
    <property type="method" value="EM"/>
    <property type="resolution" value="3.80 A"/>
    <property type="chains" value="AE=1-1407"/>
</dbReference>
<dbReference type="PDB" id="6VYS">
    <property type="method" value="EM"/>
    <property type="resolution" value="3.70 A"/>
    <property type="chains" value="AE=16-1373"/>
</dbReference>
<dbReference type="PDB" id="6VYT">
    <property type="method" value="EM"/>
    <property type="resolution" value="14.00 A"/>
    <property type="chains" value="AE=1-1407"/>
</dbReference>
<dbReference type="PDB" id="6VYU">
    <property type="method" value="EM"/>
    <property type="resolution" value="7.00 A"/>
    <property type="chains" value="AE=1-1407"/>
</dbReference>
<dbReference type="PDB" id="6VYW">
    <property type="method" value="EM"/>
    <property type="resolution" value="7.00 A"/>
    <property type="chains" value="AE=1-1407"/>
</dbReference>
<dbReference type="PDB" id="6VYX">
    <property type="method" value="EM"/>
    <property type="resolution" value="9.90 A"/>
    <property type="chains" value="AE=1-1407"/>
</dbReference>
<dbReference type="PDB" id="6VYY">
    <property type="method" value="EM"/>
    <property type="resolution" value="9.90 A"/>
    <property type="chains" value="AE=1-1407"/>
</dbReference>
<dbReference type="PDB" id="6VYZ">
    <property type="method" value="EM"/>
    <property type="resolution" value="9.90 A"/>
    <property type="chains" value="AE=1-1407"/>
</dbReference>
<dbReference type="PDB" id="6VZ2">
    <property type="method" value="EM"/>
    <property type="resolution" value="10.00 A"/>
    <property type="chains" value="AE=1-1407"/>
</dbReference>
<dbReference type="PDB" id="6VZ3">
    <property type="method" value="EM"/>
    <property type="resolution" value="8.90 A"/>
    <property type="chains" value="AE=16-1373"/>
</dbReference>
<dbReference type="PDB" id="6VZ5">
    <property type="method" value="EM"/>
    <property type="resolution" value="8.90 A"/>
    <property type="chains" value="AE=1-1407"/>
</dbReference>
<dbReference type="PDB" id="6VZ7">
    <property type="method" value="EM"/>
    <property type="resolution" value="7.00 A"/>
    <property type="chains" value="AE=16-1373"/>
</dbReference>
<dbReference type="PDB" id="6VZJ">
    <property type="method" value="EM"/>
    <property type="resolution" value="4.10 A"/>
    <property type="chains" value="AE=1-1407"/>
</dbReference>
<dbReference type="PDB" id="6WMU">
    <property type="method" value="EM"/>
    <property type="resolution" value="3.18 A"/>
    <property type="chains" value="D=1-1407"/>
</dbReference>
<dbReference type="PDB" id="6X26">
    <property type="method" value="EM"/>
    <property type="resolution" value="4.10 A"/>
    <property type="chains" value="J=1-1407"/>
</dbReference>
<dbReference type="PDB" id="6X2F">
    <property type="method" value="EM"/>
    <property type="resolution" value="4.00 A"/>
    <property type="chains" value="J=1-1407"/>
</dbReference>
<dbReference type="PDB" id="6X2N">
    <property type="method" value="EM"/>
    <property type="resolution" value="3.90 A"/>
    <property type="chains" value="J=1-1407"/>
</dbReference>
<dbReference type="PDB" id="6X43">
    <property type="method" value="EM"/>
    <property type="resolution" value="3.60 A"/>
    <property type="chains" value="J=1-1407"/>
</dbReference>
<dbReference type="PDB" id="6X4W">
    <property type="method" value="EM"/>
    <property type="resolution" value="3.80 A"/>
    <property type="chains" value="J=1-1407"/>
</dbReference>
<dbReference type="PDB" id="6X4Y">
    <property type="method" value="EM"/>
    <property type="resolution" value="3.60 A"/>
    <property type="chains" value="J=1-1407"/>
</dbReference>
<dbReference type="PDB" id="6X50">
    <property type="method" value="EM"/>
    <property type="resolution" value="3.30 A"/>
    <property type="chains" value="J=1-1407"/>
</dbReference>
<dbReference type="PDB" id="6X6T">
    <property type="method" value="EM"/>
    <property type="resolution" value="3.20 A"/>
    <property type="chains" value="AE=1-1407"/>
</dbReference>
<dbReference type="PDB" id="6X7F">
    <property type="method" value="EM"/>
    <property type="resolution" value="3.50 A"/>
    <property type="chains" value="AE=1-1407"/>
</dbReference>
<dbReference type="PDB" id="6X7K">
    <property type="method" value="EM"/>
    <property type="resolution" value="3.10 A"/>
    <property type="chains" value="AE=1-1407"/>
</dbReference>
<dbReference type="PDB" id="6X9Q">
    <property type="method" value="EM"/>
    <property type="resolution" value="4.80 A"/>
    <property type="chains" value="AE=1-1407"/>
</dbReference>
<dbReference type="PDB" id="6XAS">
    <property type="method" value="EM"/>
    <property type="resolution" value="3.80 A"/>
    <property type="chains" value="J=2-1407"/>
</dbReference>
<dbReference type="PDB" id="6XAV">
    <property type="method" value="EM"/>
    <property type="resolution" value="7.70 A"/>
    <property type="chains" value="J=2-1407"/>
</dbReference>
<dbReference type="PDB" id="6XDQ">
    <property type="method" value="EM"/>
    <property type="resolution" value="3.70 A"/>
    <property type="chains" value="AE=1-1407"/>
</dbReference>
<dbReference type="PDB" id="6XDR">
    <property type="method" value="EM"/>
    <property type="resolution" value="4.70 A"/>
    <property type="chains" value="AE=1-1407"/>
</dbReference>
<dbReference type="PDB" id="6XGF">
    <property type="method" value="EM"/>
    <property type="resolution" value="5.00 A"/>
    <property type="chains" value="AE=1-1407"/>
</dbReference>
<dbReference type="PDB" id="6XH7">
    <property type="method" value="EM"/>
    <property type="resolution" value="3.90 A"/>
    <property type="chains" value="D=1-1407"/>
</dbReference>
<dbReference type="PDB" id="6XH8">
    <property type="method" value="EM"/>
    <property type="resolution" value="4.10 A"/>
    <property type="chains" value="D=1-1407"/>
</dbReference>
<dbReference type="PDB" id="6XII">
    <property type="method" value="EM"/>
    <property type="resolution" value="7.00 A"/>
    <property type="chains" value="AE=1-1407"/>
</dbReference>
<dbReference type="PDB" id="6XIJ">
    <property type="method" value="EM"/>
    <property type="resolution" value="8.00 A"/>
    <property type="chains" value="AE=1-1407"/>
</dbReference>
<dbReference type="PDB" id="6XL5">
    <property type="method" value="EM"/>
    <property type="resolution" value="2.50 A"/>
    <property type="chains" value="D=1-1407"/>
</dbReference>
<dbReference type="PDB" id="6XL9">
    <property type="method" value="EM"/>
    <property type="resolution" value="2.50 A"/>
    <property type="chains" value="D=1-1407"/>
</dbReference>
<dbReference type="PDB" id="6XLJ">
    <property type="method" value="EM"/>
    <property type="resolution" value="2.70 A"/>
    <property type="chains" value="D=1-1407"/>
</dbReference>
<dbReference type="PDB" id="6XLL">
    <property type="method" value="EM"/>
    <property type="resolution" value="2.70 A"/>
    <property type="chains" value="D=1-1407"/>
</dbReference>
<dbReference type="PDB" id="6XLM">
    <property type="method" value="EM"/>
    <property type="resolution" value="3.20 A"/>
    <property type="chains" value="D=1-1407"/>
</dbReference>
<dbReference type="PDB" id="6XLN">
    <property type="method" value="EM"/>
    <property type="resolution" value="2.80 A"/>
    <property type="chains" value="D=1-1407"/>
</dbReference>
<dbReference type="PDB" id="6Z9P">
    <property type="method" value="EM"/>
    <property type="resolution" value="3.90 A"/>
    <property type="chains" value="Y=1-1407"/>
</dbReference>
<dbReference type="PDB" id="6Z9Q">
    <property type="method" value="EM"/>
    <property type="resolution" value="5.70 A"/>
    <property type="chains" value="Y=1-1407"/>
</dbReference>
<dbReference type="PDB" id="6Z9R">
    <property type="method" value="EM"/>
    <property type="resolution" value="4.10 A"/>
    <property type="chains" value="Y=1-1407"/>
</dbReference>
<dbReference type="PDB" id="6Z9S">
    <property type="method" value="EM"/>
    <property type="resolution" value="4.40 A"/>
    <property type="chains" value="Y=1-1407"/>
</dbReference>
<dbReference type="PDB" id="6Z9T">
    <property type="method" value="EM"/>
    <property type="resolution" value="4.10 A"/>
    <property type="chains" value="Y=1-1407"/>
</dbReference>
<dbReference type="PDB" id="6ZTJ">
    <property type="method" value="EM"/>
    <property type="resolution" value="3.40 A"/>
    <property type="chains" value="CD=1-1407"/>
</dbReference>
<dbReference type="PDB" id="6ZTL">
    <property type="method" value="EM"/>
    <property type="resolution" value="3.50 A"/>
    <property type="chains" value="CD=1-1407"/>
</dbReference>
<dbReference type="PDB" id="6ZTM">
    <property type="method" value="EM"/>
    <property type="resolution" value="3.30 A"/>
    <property type="chains" value="CD=1-1407"/>
</dbReference>
<dbReference type="PDB" id="6ZTN">
    <property type="method" value="EM"/>
    <property type="resolution" value="3.90 A"/>
    <property type="chains" value="CD=1-1407"/>
</dbReference>
<dbReference type="PDB" id="6ZTO">
    <property type="method" value="EM"/>
    <property type="resolution" value="3.00 A"/>
    <property type="chains" value="CD=1-1407"/>
</dbReference>
<dbReference type="PDB" id="6ZTP">
    <property type="method" value="EM"/>
    <property type="resolution" value="3.00 A"/>
    <property type="chains" value="CD=1-1407"/>
</dbReference>
<dbReference type="PDB" id="6ZU1">
    <property type="method" value="EM"/>
    <property type="resolution" value="3.00 A"/>
    <property type="chains" value="CD=1-1407"/>
</dbReference>
<dbReference type="PDB" id="7ADB">
    <property type="method" value="EM"/>
    <property type="resolution" value="4.40 A"/>
    <property type="chains" value="Y=1-1407"/>
</dbReference>
<dbReference type="PDB" id="7ADC">
    <property type="method" value="EM"/>
    <property type="resolution" value="4.00 A"/>
    <property type="chains" value="Y=1-1407"/>
</dbReference>
<dbReference type="PDB" id="7ADD">
    <property type="method" value="EM"/>
    <property type="resolution" value="4.30 A"/>
    <property type="chains" value="Y=1-1407"/>
</dbReference>
<dbReference type="PDB" id="7ADE">
    <property type="method" value="EM"/>
    <property type="resolution" value="4.20 A"/>
    <property type="chains" value="Y=1-1407"/>
</dbReference>
<dbReference type="PDB" id="7BEF">
    <property type="method" value="EM"/>
    <property type="resolution" value="4.50 A"/>
    <property type="chains" value="D=1-1407"/>
</dbReference>
<dbReference type="PDB" id="7BEG">
    <property type="method" value="EM"/>
    <property type="resolution" value="4.20 A"/>
    <property type="chains" value="D=1-1407"/>
</dbReference>
<dbReference type="PDB" id="7C17">
    <property type="method" value="EM"/>
    <property type="resolution" value="4.22 A"/>
    <property type="chains" value="D=1-1407"/>
</dbReference>
<dbReference type="PDB" id="7C97">
    <property type="method" value="EM"/>
    <property type="resolution" value="3.68 A"/>
    <property type="chains" value="D=1-1407"/>
</dbReference>
<dbReference type="PDB" id="7CHW">
    <property type="method" value="EM"/>
    <property type="resolution" value="3.58 A"/>
    <property type="chains" value="D=1-1407"/>
</dbReference>
<dbReference type="PDB" id="7DY6">
    <property type="method" value="EM"/>
    <property type="resolution" value="3.68 A"/>
    <property type="chains" value="D=1-1407"/>
</dbReference>
<dbReference type="PDB" id="7KHB">
    <property type="method" value="EM"/>
    <property type="resolution" value="3.53 A"/>
    <property type="chains" value="D=1-1407"/>
</dbReference>
<dbReference type="PDB" id="7KHC">
    <property type="method" value="EM"/>
    <property type="resolution" value="4.14 A"/>
    <property type="chains" value="D=1-1407"/>
</dbReference>
<dbReference type="PDB" id="7KHE">
    <property type="method" value="EM"/>
    <property type="resolution" value="3.58 A"/>
    <property type="chains" value="D=1-1407"/>
</dbReference>
<dbReference type="PDB" id="7KHI">
    <property type="method" value="EM"/>
    <property type="resolution" value="3.62 A"/>
    <property type="chains" value="D=1-1407"/>
</dbReference>
<dbReference type="PDB" id="7M8E">
    <property type="method" value="EM"/>
    <property type="resolution" value="3.40 A"/>
    <property type="chains" value="D=1-1407"/>
</dbReference>
<dbReference type="PDB" id="7MKD">
    <property type="method" value="EM"/>
    <property type="resolution" value="3.20 A"/>
    <property type="chains" value="J=1-1407"/>
</dbReference>
<dbReference type="PDB" id="7MKE">
    <property type="method" value="EM"/>
    <property type="resolution" value="3.70 A"/>
    <property type="chains" value="J=1-1407"/>
</dbReference>
<dbReference type="PDB" id="7MKI">
    <property type="method" value="EM"/>
    <property type="resolution" value="3.50 A"/>
    <property type="chains" value="J=1-1407"/>
</dbReference>
<dbReference type="PDB" id="7MKJ">
    <property type="method" value="EM"/>
    <property type="resolution" value="2.90 A"/>
    <property type="chains" value="J=1-1407"/>
</dbReference>
<dbReference type="PDB" id="7MKN">
    <property type="method" value="EM"/>
    <property type="resolution" value="3.30 A"/>
    <property type="chains" value="D=14-1376"/>
</dbReference>
<dbReference type="PDB" id="7MKO">
    <property type="method" value="EM"/>
    <property type="resolution" value="3.15 A"/>
    <property type="chains" value="D=14-1376"/>
</dbReference>
<dbReference type="PDB" id="7MKP">
    <property type="method" value="EM"/>
    <property type="resolution" value="3.41 A"/>
    <property type="chains" value="D=14-1376"/>
</dbReference>
<dbReference type="PDB" id="7MKQ">
    <property type="method" value="EM"/>
    <property type="resolution" value="4.80 A"/>
    <property type="chains" value="D=14-1376"/>
</dbReference>
<dbReference type="PDB" id="7N4E">
    <property type="method" value="EM"/>
    <property type="resolution" value="3.80 A"/>
    <property type="chains" value="D=1-1407"/>
</dbReference>
<dbReference type="PDB" id="7PY0">
    <property type="method" value="EM"/>
    <property type="resolution" value="4.50 A"/>
    <property type="chains" value="D=1-1407"/>
</dbReference>
<dbReference type="PDB" id="7PY1">
    <property type="method" value="EM"/>
    <property type="resolution" value="3.80 A"/>
    <property type="chains" value="D=1-1407"/>
</dbReference>
<dbReference type="PDB" id="7PY3">
    <property type="method" value="EM"/>
    <property type="resolution" value="3.80 A"/>
    <property type="chains" value="D=1-1407"/>
</dbReference>
<dbReference type="PDB" id="7PY5">
    <property type="method" value="EM"/>
    <property type="resolution" value="3.90 A"/>
    <property type="chains" value="D=1-1407"/>
</dbReference>
<dbReference type="PDB" id="7PY6">
    <property type="method" value="EM"/>
    <property type="resolution" value="4.10 A"/>
    <property type="chains" value="D=1-1407"/>
</dbReference>
<dbReference type="PDB" id="7PY7">
    <property type="method" value="EM"/>
    <property type="resolution" value="4.10 A"/>
    <property type="chains" value="D=1-1407"/>
</dbReference>
<dbReference type="PDB" id="7PY8">
    <property type="method" value="EM"/>
    <property type="resolution" value="3.80 A"/>
    <property type="chains" value="D=1-1407"/>
</dbReference>
<dbReference type="PDB" id="7PYJ">
    <property type="method" value="EM"/>
    <property type="resolution" value="4.20 A"/>
    <property type="chains" value="D=1-1407"/>
</dbReference>
<dbReference type="PDB" id="7PYK">
    <property type="method" value="EM"/>
    <property type="resolution" value="4.10 A"/>
    <property type="chains" value="D=1-1407"/>
</dbReference>
<dbReference type="PDB" id="7Q0J">
    <property type="method" value="EM"/>
    <property type="resolution" value="4.30 A"/>
    <property type="chains" value="D=1-1407"/>
</dbReference>
<dbReference type="PDB" id="7Q0K">
    <property type="method" value="EM"/>
    <property type="resolution" value="4.00 A"/>
    <property type="chains" value="D=1-1407"/>
</dbReference>
<dbReference type="PDB" id="7QV9">
    <property type="method" value="EM"/>
    <property type="resolution" value="3.50 A"/>
    <property type="chains" value="D=1-1407"/>
</dbReference>
<dbReference type="PDB" id="7QWP">
    <property type="method" value="EM"/>
    <property type="resolution" value="3.40 A"/>
    <property type="chains" value="D=1-1407"/>
</dbReference>
<dbReference type="PDB" id="7QXI">
    <property type="method" value="EM"/>
    <property type="resolution" value="3.40 A"/>
    <property type="chains" value="D=1-1407"/>
</dbReference>
<dbReference type="PDB" id="7SZJ">
    <property type="method" value="EM"/>
    <property type="resolution" value="3.11 A"/>
    <property type="chains" value="D=1-1407"/>
</dbReference>
<dbReference type="PDB" id="7SZK">
    <property type="method" value="EM"/>
    <property type="resolution" value="2.94 A"/>
    <property type="chains" value="D=1-1407"/>
</dbReference>
<dbReference type="PDB" id="7UBM">
    <property type="method" value="EM"/>
    <property type="resolution" value="3.13 A"/>
    <property type="chains" value="D=1-1407"/>
</dbReference>
<dbReference type="PDB" id="7UBN">
    <property type="method" value="EM"/>
    <property type="resolution" value="3.36 A"/>
    <property type="chains" value="D=1-1407"/>
</dbReference>
<dbReference type="PDB" id="7UWE">
    <property type="method" value="EM"/>
    <property type="resolution" value="2.90 A"/>
    <property type="chains" value="J=1-1407"/>
</dbReference>
<dbReference type="PDB" id="7UWH">
    <property type="method" value="EM"/>
    <property type="resolution" value="3.10 A"/>
    <property type="chains" value="J=1-1407"/>
</dbReference>
<dbReference type="PDB" id="7VWY">
    <property type="method" value="EM"/>
    <property type="resolution" value="4.57 A"/>
    <property type="chains" value="D=1-1407"/>
</dbReference>
<dbReference type="PDB" id="7VWZ">
    <property type="method" value="EM"/>
    <property type="resolution" value="4.00 A"/>
    <property type="chains" value="D=1-1407"/>
</dbReference>
<dbReference type="PDB" id="7W5W">
    <property type="method" value="EM"/>
    <property type="resolution" value="4.55 A"/>
    <property type="chains" value="D=1-1407"/>
</dbReference>
<dbReference type="PDB" id="7W5X">
    <property type="method" value="EM"/>
    <property type="resolution" value="3.40 A"/>
    <property type="chains" value="D=1-1407"/>
</dbReference>
<dbReference type="PDB" id="7W5Y">
    <property type="method" value="EM"/>
    <property type="resolution" value="4.20 A"/>
    <property type="chains" value="D=1-1407"/>
</dbReference>
<dbReference type="PDB" id="7XUE">
    <property type="method" value="EM"/>
    <property type="resolution" value="3.17 A"/>
    <property type="chains" value="J=1-1407"/>
</dbReference>
<dbReference type="PDB" id="7XUG">
    <property type="method" value="EM"/>
    <property type="resolution" value="3.57 A"/>
    <property type="chains" value="J=1-1407"/>
</dbReference>
<dbReference type="PDB" id="7XUI">
    <property type="method" value="EM"/>
    <property type="resolution" value="3.61 A"/>
    <property type="chains" value="J=1-1407"/>
</dbReference>
<dbReference type="PDB" id="7YP9">
    <property type="method" value="EM"/>
    <property type="resolution" value="3.58 A"/>
    <property type="chains" value="D=1-1407"/>
</dbReference>
<dbReference type="PDB" id="7YPA">
    <property type="method" value="EM"/>
    <property type="resolution" value="3.05 A"/>
    <property type="chains" value="D=1-1407"/>
</dbReference>
<dbReference type="PDB" id="7YPB">
    <property type="method" value="EM"/>
    <property type="resolution" value="3.48 A"/>
    <property type="chains" value="D=1-1407"/>
</dbReference>
<dbReference type="PDB" id="8ABY">
    <property type="method" value="EM"/>
    <property type="resolution" value="3.70 A"/>
    <property type="chains" value="D=1-1406"/>
</dbReference>
<dbReference type="PDB" id="8ABZ">
    <property type="method" value="EM"/>
    <property type="resolution" value="3.40 A"/>
    <property type="chains" value="D=1-1406"/>
</dbReference>
<dbReference type="PDB" id="8AC0">
    <property type="method" value="EM"/>
    <property type="resolution" value="4.10 A"/>
    <property type="chains" value="D=1-1406"/>
</dbReference>
<dbReference type="PDB" id="8AC1">
    <property type="method" value="EM"/>
    <property type="resolution" value="4.06 A"/>
    <property type="chains" value="D=1-1406"/>
</dbReference>
<dbReference type="PDB" id="8AC2">
    <property type="method" value="EM"/>
    <property type="resolution" value="3.70 A"/>
    <property type="chains" value="D=1-1406"/>
</dbReference>
<dbReference type="PDB" id="8ACP">
    <property type="method" value="EM"/>
    <property type="resolution" value="4.50 A"/>
    <property type="chains" value="D=1-1406"/>
</dbReference>
<dbReference type="PDB" id="8AD1">
    <property type="method" value="EM"/>
    <property type="resolution" value="4.10 A"/>
    <property type="chains" value="D=1-1406"/>
</dbReference>
<dbReference type="PDB" id="8E3F">
    <property type="method" value="EM"/>
    <property type="resolution" value="6.50 A"/>
    <property type="chains" value="B=1-1407"/>
</dbReference>
<dbReference type="PDB" id="8E5K">
    <property type="method" value="EM"/>
    <property type="resolution" value="4.20 A"/>
    <property type="chains" value="B=1-1407"/>
</dbReference>
<dbReference type="PDB" id="8E5O">
    <property type="method" value="EM"/>
    <property type="resolution" value="4.40 A"/>
    <property type="chains" value="B=1-1407"/>
</dbReference>
<dbReference type="PDB" id="8E6X">
    <property type="method" value="EM"/>
    <property type="resolution" value="4.27 A"/>
    <property type="chains" value="B=1-1407"/>
</dbReference>
<dbReference type="PDB" id="8E6Z">
    <property type="method" value="EM"/>
    <property type="resolution" value="4.10 A"/>
    <property type="chains" value="B=1-1407"/>
</dbReference>
<dbReference type="PDB" id="8EG7">
    <property type="method" value="EM"/>
    <property type="resolution" value="3.20 A"/>
    <property type="chains" value="J=2-1407"/>
</dbReference>
<dbReference type="PDB" id="8EG8">
    <property type="method" value="EM"/>
    <property type="resolution" value="3.30 A"/>
    <property type="chains" value="J=1-1406"/>
</dbReference>
<dbReference type="PDB" id="8EGB">
    <property type="method" value="EM"/>
    <property type="resolution" value="3.80 A"/>
    <property type="chains" value="J=2-1407"/>
</dbReference>
<dbReference type="PDB" id="8EH8">
    <property type="method" value="EM"/>
    <property type="resolution" value="3.40 A"/>
    <property type="chains" value="J=2-1407"/>
</dbReference>
<dbReference type="PDB" id="8EH9">
    <property type="method" value="EM"/>
    <property type="resolution" value="3.90 A"/>
    <property type="chains" value="J=2-1407"/>
</dbReference>
<dbReference type="PDB" id="8EHA">
    <property type="method" value="EM"/>
    <property type="resolution" value="3.70 A"/>
    <property type="chains" value="J=2-1407"/>
</dbReference>
<dbReference type="PDB" id="8EHF">
    <property type="method" value="EM"/>
    <property type="resolution" value="3.30 A"/>
    <property type="chains" value="J=2-1407"/>
</dbReference>
<dbReference type="PDB" id="8EHI">
    <property type="method" value="EM"/>
    <property type="resolution" value="5.50 A"/>
    <property type="chains" value="J=2-1407"/>
</dbReference>
<dbReference type="PDB" id="8F1I">
    <property type="method" value="EM"/>
    <property type="resolution" value="3.00 A"/>
    <property type="chains" value="J=1-1407"/>
</dbReference>
<dbReference type="PDB" id="8F1J">
    <property type="method" value="EM"/>
    <property type="resolution" value="2.60 A"/>
    <property type="chains" value="J=1-1407"/>
</dbReference>
<dbReference type="PDB" id="8F1K">
    <property type="method" value="EM"/>
    <property type="resolution" value="2.80 A"/>
    <property type="chains" value="J=1-1407"/>
</dbReference>
<dbReference type="PDB" id="8F3C">
    <property type="method" value="EM"/>
    <property type="resolution" value="3.40 A"/>
    <property type="chains" value="J=1-1407"/>
</dbReference>
<dbReference type="PDB" id="8FIX">
    <property type="method" value="EM"/>
    <property type="resolution" value="3.90 A"/>
    <property type="chains" value="D=1-1407"/>
</dbReference>
<dbReference type="PDB" id="8FIY">
    <property type="method" value="EM"/>
    <property type="resolution" value="7.30 A"/>
    <property type="chains" value="D=1-1407"/>
</dbReference>
<dbReference type="PDB" id="8FTD">
    <property type="method" value="EM"/>
    <property type="resolution" value="2.76 A"/>
    <property type="chains" value="J=1-1407"/>
</dbReference>
<dbReference type="PDB" id="8FVR">
    <property type="method" value="EM"/>
    <property type="resolution" value="2.42 A"/>
    <property type="chains" value="G=1-1407"/>
</dbReference>
<dbReference type="PDB" id="8FVW">
    <property type="method" value="EM"/>
    <property type="resolution" value="2.10 A"/>
    <property type="chains" value="G=1-1407"/>
</dbReference>
<dbReference type="PDB" id="8G00">
    <property type="method" value="EM"/>
    <property type="resolution" value="3.40 A"/>
    <property type="chains" value="J=1-1407"/>
</dbReference>
<dbReference type="PDB" id="8G1S">
    <property type="method" value="EM"/>
    <property type="resolution" value="3.70 A"/>
    <property type="chains" value="J=1-1373"/>
</dbReference>
<dbReference type="PDB" id="8G2W">
    <property type="method" value="EM"/>
    <property type="resolution" value="3.70 A"/>
    <property type="chains" value="J=16-1373"/>
</dbReference>
<dbReference type="PDB" id="8G4W">
    <property type="method" value="EM"/>
    <property type="resolution" value="3.80 A"/>
    <property type="chains" value="J=16-1373"/>
</dbReference>
<dbReference type="PDB" id="8G7E">
    <property type="method" value="EM"/>
    <property type="resolution" value="3.90 A"/>
    <property type="chains" value="J=1-1407"/>
</dbReference>
<dbReference type="PDB" id="8G8Z">
    <property type="method" value="EM"/>
    <property type="resolution" value="4.30 A"/>
    <property type="chains" value="J=16-1373"/>
</dbReference>
<dbReference type="PDB" id="8HKC">
    <property type="method" value="EM"/>
    <property type="resolution" value="2.49 A"/>
    <property type="chains" value="F=2-1407"/>
</dbReference>
<dbReference type="PDB" id="8IGR">
    <property type="method" value="EM"/>
    <property type="resolution" value="3.10 A"/>
    <property type="chains" value="J=1-1407"/>
</dbReference>
<dbReference type="PDB" id="8IGS">
    <property type="method" value="EM"/>
    <property type="resolution" value="3.40 A"/>
    <property type="chains" value="J=1-1407"/>
</dbReference>
<dbReference type="PDB" id="8JO2">
    <property type="method" value="EM"/>
    <property type="resolution" value="2.74 A"/>
    <property type="chains" value="D=1-1407"/>
</dbReference>
<dbReference type="PDB" id="8K58">
    <property type="method" value="EM"/>
    <property type="resolution" value="3.15 A"/>
    <property type="chains" value="D=14-1376"/>
</dbReference>
<dbReference type="PDB" id="8K59">
    <property type="method" value="EM"/>
    <property type="resolution" value="3.50 A"/>
    <property type="chains" value="D=14-1376"/>
</dbReference>
<dbReference type="PDB" id="8K5A">
    <property type="method" value="EM"/>
    <property type="resolution" value="3.30 A"/>
    <property type="chains" value="D=14-1376"/>
</dbReference>
<dbReference type="PDB" id="8PBL">
    <property type="method" value="EM"/>
    <property type="resolution" value="2.87 A"/>
    <property type="chains" value="G=1-1407"/>
</dbReference>
<dbReference type="PDB" id="8PDY">
    <property type="method" value="EM"/>
    <property type="resolution" value="2.80 A"/>
    <property type="chains" value="J=2-1407"/>
</dbReference>
<dbReference type="PDB" id="8PEN">
    <property type="method" value="EM"/>
    <property type="resolution" value="3.10 A"/>
    <property type="chains" value="J=2-1407"/>
</dbReference>
<dbReference type="PDB" id="8PFG">
    <property type="method" value="EM"/>
    <property type="resolution" value="3.10 A"/>
    <property type="chains" value="J=2-1407"/>
</dbReference>
<dbReference type="PDB" id="8PFJ">
    <property type="method" value="EM"/>
    <property type="resolution" value="3.40 A"/>
    <property type="chains" value="J=2-1407"/>
</dbReference>
<dbReference type="PDB" id="8PH9">
    <property type="method" value="EM"/>
    <property type="resolution" value="3.00 A"/>
    <property type="chains" value="J=2-1407"/>
</dbReference>
<dbReference type="PDB" id="8PHK">
    <property type="method" value="EM"/>
    <property type="resolution" value="3.10 A"/>
    <property type="chains" value="J=2-1407"/>
</dbReference>
<dbReference type="PDB" id="8PIB">
    <property type="method" value="EM"/>
    <property type="resolution" value="2.60 A"/>
    <property type="chains" value="J=2-1407"/>
</dbReference>
<dbReference type="PDB" id="8PID">
    <property type="method" value="EM"/>
    <property type="resolution" value="3.00 A"/>
    <property type="chains" value="J=2-1407"/>
</dbReference>
<dbReference type="PDB" id="8PIL">
    <property type="method" value="EM"/>
    <property type="resolution" value="3.20 A"/>
    <property type="chains" value="J=2-1407"/>
</dbReference>
<dbReference type="PDB" id="8PIM">
    <property type="method" value="EM"/>
    <property type="resolution" value="3.40 A"/>
    <property type="chains" value="J=2-1407"/>
</dbReference>
<dbReference type="PDB" id="8RE4">
    <property type="method" value="EM"/>
    <property type="resolution" value="2.80 A"/>
    <property type="chains" value="D=4-1376"/>
</dbReference>
<dbReference type="PDB" id="8REA">
    <property type="method" value="EM"/>
    <property type="resolution" value="3.40 A"/>
    <property type="chains" value="D=4-1376"/>
</dbReference>
<dbReference type="PDB" id="8REB">
    <property type="method" value="EM"/>
    <property type="resolution" value="3.40 A"/>
    <property type="chains" value="D=4-1376"/>
</dbReference>
<dbReference type="PDB" id="8REC">
    <property type="method" value="EM"/>
    <property type="resolution" value="3.50 A"/>
    <property type="chains" value="D=4-1376"/>
</dbReference>
<dbReference type="PDB" id="8RED">
    <property type="method" value="EM"/>
    <property type="resolution" value="3.90 A"/>
    <property type="chains" value="D=4-1376"/>
</dbReference>
<dbReference type="PDB" id="8REE">
    <property type="method" value="EM"/>
    <property type="resolution" value="3.80 A"/>
    <property type="chains" value="D=4-1376"/>
</dbReference>
<dbReference type="PDB" id="8SY5">
    <property type="method" value="EM"/>
    <property type="resolution" value="2.70 A"/>
    <property type="chains" value="J=1-1407"/>
</dbReference>
<dbReference type="PDB" id="8SY6">
    <property type="method" value="EM"/>
    <property type="resolution" value="3.28 A"/>
    <property type="chains" value="J=1-1407"/>
</dbReference>
<dbReference type="PDB" id="8SY7">
    <property type="method" value="EM"/>
    <property type="resolution" value="2.65 A"/>
    <property type="chains" value="J=1-1407"/>
</dbReference>
<dbReference type="PDB" id="8TO1">
    <property type="method" value="EM"/>
    <property type="resolution" value="2.80 A"/>
    <property type="chains" value="J=1-1407"/>
</dbReference>
<dbReference type="PDB" id="8TO6">
    <property type="method" value="EM"/>
    <property type="resolution" value="2.90 A"/>
    <property type="chains" value="J=1-1407"/>
</dbReference>
<dbReference type="PDB" id="8TO8">
    <property type="method" value="EM"/>
    <property type="resolution" value="2.90 A"/>
    <property type="chains" value="J=1-1407"/>
</dbReference>
<dbReference type="PDB" id="8TOE">
    <property type="method" value="EM"/>
    <property type="resolution" value="2.90 A"/>
    <property type="chains" value="J=1-1407"/>
</dbReference>
<dbReference type="PDB" id="8TOM">
    <property type="method" value="EM"/>
    <property type="resolution" value="3.10 A"/>
    <property type="chains" value="J=1-1407"/>
</dbReference>
<dbReference type="PDB" id="8TXO">
    <property type="method" value="EM"/>
    <property type="resolution" value="3.10 A"/>
    <property type="chains" value="J=1-1407"/>
</dbReference>
<dbReference type="PDB" id="8U3B">
    <property type="method" value="EM"/>
    <property type="resolution" value="3.23 A"/>
    <property type="chains" value="D=1-1407"/>
</dbReference>
<dbReference type="PDB" id="8UPO">
    <property type="method" value="EM"/>
    <property type="resolution" value="5.50 A"/>
    <property type="chains" value="AE=1-1407"/>
</dbReference>
<dbReference type="PDB" id="8UPR">
    <property type="method" value="EM"/>
    <property type="resolution" value="5.30 A"/>
    <property type="chains" value="AE=1-1407"/>
</dbReference>
<dbReference type="PDB" id="8UQL">
    <property type="method" value="EM"/>
    <property type="resolution" value="3.20 A"/>
    <property type="chains" value="AE=1-1407"/>
</dbReference>
<dbReference type="PDB" id="8UQM">
    <property type="method" value="EM"/>
    <property type="resolution" value="5.30 A"/>
    <property type="chains" value="AE=1-1407"/>
</dbReference>
<dbReference type="PDB" id="8UQP">
    <property type="method" value="EM"/>
    <property type="resolution" value="3.80 A"/>
    <property type="chains" value="AE=1-1407"/>
</dbReference>
<dbReference type="PDB" id="8UR0">
    <property type="method" value="EM"/>
    <property type="resolution" value="3.40 A"/>
    <property type="chains" value="AE=1-1407"/>
</dbReference>
<dbReference type="PDB" id="8URH">
    <property type="method" value="EM"/>
    <property type="resolution" value="5.70 A"/>
    <property type="chains" value="AE=1-1407"/>
</dbReference>
<dbReference type="PDB" id="8URI">
    <property type="method" value="EM"/>
    <property type="resolution" value="5.30 A"/>
    <property type="chains" value="AE=1-1407"/>
</dbReference>
<dbReference type="PDB" id="8URX">
    <property type="method" value="EM"/>
    <property type="resolution" value="6.60 A"/>
    <property type="chains" value="AE=1-1407"/>
</dbReference>
<dbReference type="PDB" id="8URY">
    <property type="method" value="EM"/>
    <property type="resolution" value="3.10 A"/>
    <property type="chains" value="AE=1-1407"/>
</dbReference>
<dbReference type="PDB" id="8Y6U">
    <property type="method" value="EM"/>
    <property type="resolution" value="3.97 A"/>
    <property type="chains" value="D=1-1407"/>
</dbReference>
<dbReference type="PDB" id="9DR1">
    <property type="method" value="EM"/>
    <property type="resolution" value="3.70 A"/>
    <property type="chains" value="J=16-1373"/>
</dbReference>
<dbReference type="PDB" id="9GUR">
    <property type="method" value="EM"/>
    <property type="resolution" value="4.20 A"/>
    <property type="chains" value="4=15-1373"/>
</dbReference>
<dbReference type="PDB" id="9GUW">
    <property type="method" value="EM"/>
    <property type="resolution" value="3.10 A"/>
    <property type="chains" value="4=1-1406"/>
</dbReference>
<dbReference type="PDB" id="9GUX">
    <property type="method" value="EM"/>
    <property type="resolution" value="3.30 A"/>
    <property type="chains" value="4=1-1406"/>
</dbReference>
<dbReference type="PDB" id="9Q96">
    <property type="method" value="EM"/>
    <property type="resolution" value="4.60 A"/>
    <property type="chains" value="D=1-1407"/>
</dbReference>
<dbReference type="PDBsum" id="2AUK"/>
<dbReference type="PDBsum" id="2LMC"/>
<dbReference type="PDBsum" id="3IYD"/>
<dbReference type="PDBsum" id="3LU0"/>
<dbReference type="PDBsum" id="4IQZ"/>
<dbReference type="PDBsum" id="4JK1"/>
<dbReference type="PDBsum" id="4JK2"/>
<dbReference type="PDBsum" id="4KMU"/>
<dbReference type="PDBsum" id="4KN4"/>
<dbReference type="PDBsum" id="4KN7"/>
<dbReference type="PDBsum" id="4MEX"/>
<dbReference type="PDBsum" id="4MEY"/>
<dbReference type="PDBsum" id="4XSX"/>
<dbReference type="PDBsum" id="4XSY"/>
<dbReference type="PDBsum" id="4XSZ"/>
<dbReference type="PDBsum" id="4YG2"/>
<dbReference type="PDBsum" id="4YLN"/>
<dbReference type="PDBsum" id="4YLO"/>
<dbReference type="PDBsum" id="4YLP"/>
<dbReference type="PDBsum" id="4ZH2"/>
<dbReference type="PDBsum" id="4ZH3"/>
<dbReference type="PDBsum" id="4ZH4"/>
<dbReference type="PDBsum" id="5EZK"/>
<dbReference type="PDBsum" id="5IPL"/>
<dbReference type="PDBsum" id="5IPM"/>
<dbReference type="PDBsum" id="5IPN"/>
<dbReference type="PDBsum" id="5MS0"/>
<dbReference type="PDBsum" id="5MY1"/>
<dbReference type="PDBsum" id="5NSR"/>
<dbReference type="PDBsum" id="5NSS"/>
<dbReference type="PDBsum" id="5NWT"/>
<dbReference type="PDBsum" id="5UAC"/>
<dbReference type="PDBsum" id="5UAG"/>
<dbReference type="PDBsum" id="5UAH"/>
<dbReference type="PDBsum" id="5UAJ"/>
<dbReference type="PDBsum" id="5UAL"/>
<dbReference type="PDBsum" id="5UAQ"/>
<dbReference type="PDBsum" id="5UI8"/>
<dbReference type="PDBsum" id="5VSW"/>
<dbReference type="PDBsum" id="5VT0"/>
<dbReference type="PDBsum" id="5W1S"/>
<dbReference type="PDBsum" id="5W1T"/>
<dbReference type="PDBsum" id="6ALF"/>
<dbReference type="PDBsum" id="6ALG"/>
<dbReference type="PDBsum" id="6ALH"/>
<dbReference type="PDBsum" id="6ASX"/>
<dbReference type="PDBsum" id="6AWB"/>
<dbReference type="PDBsum" id="6AWC"/>
<dbReference type="PDBsum" id="6AWD"/>
<dbReference type="PDBsum" id="6B6H"/>
<dbReference type="PDBsum" id="6BJS"/>
<dbReference type="PDBsum" id="6BYU"/>
<dbReference type="PDBsum" id="6C6S"/>
<dbReference type="PDBsum" id="6C6T"/>
<dbReference type="PDBsum" id="6C6U"/>
<dbReference type="PDBsum" id="6C9Y"/>
<dbReference type="PDBsum" id="6CA0"/>
<dbReference type="PDBsum" id="6CUX"/>
<dbReference type="PDBsum" id="6FLP"/>
<dbReference type="PDBsum" id="6FLQ"/>
<dbReference type="PDBsum" id="6GFW"/>
<dbReference type="PDBsum" id="6GH5"/>
<dbReference type="PDBsum" id="6GH6"/>
<dbReference type="PDBsum" id="6GOV"/>
<dbReference type="PDBsum" id="6JBQ"/>
<dbReference type="PDBsum" id="6JNX"/>
<dbReference type="PDBsum" id="6K4Y"/>
<dbReference type="PDBsum" id="6KJ6"/>
<dbReference type="PDBsum" id="6LDI"/>
<dbReference type="PDBsum" id="6N4C"/>
<dbReference type="PDBsum" id="6N57"/>
<dbReference type="PDBsum" id="6N58"/>
<dbReference type="PDBsum" id="6N60"/>
<dbReference type="PDBsum" id="6N61"/>
<dbReference type="PDBsum" id="6N62"/>
<dbReference type="PDBsum" id="6OMF"/>
<dbReference type="PDBsum" id="6P18"/>
<dbReference type="PDBsum" id="6P19"/>
<dbReference type="PDBsum" id="6P1K"/>
<dbReference type="PDBsum" id="6PB4"/>
<dbReference type="PDBsum" id="6PB5"/>
<dbReference type="PDBsum" id="6PB6"/>
<dbReference type="PDBsum" id="6PMI"/>
<dbReference type="PDBsum" id="6PMJ"/>
<dbReference type="PDBsum" id="6PSQ"/>
<dbReference type="PDBsum" id="6PSR"/>
<dbReference type="PDBsum" id="6PSS"/>
<dbReference type="PDBsum" id="6PST"/>
<dbReference type="PDBsum" id="6PSU"/>
<dbReference type="PDBsum" id="6PSV"/>
<dbReference type="PDBsum" id="6PSW"/>
<dbReference type="PDBsum" id="6R9B"/>
<dbReference type="PDBsum" id="6R9G"/>
<dbReference type="PDBsum" id="6RH3"/>
<dbReference type="PDBsum" id="6RI7"/>
<dbReference type="PDBsum" id="6RI9"/>
<dbReference type="PDBsum" id="6RIN"/>
<dbReference type="PDBsum" id="6RIP"/>
<dbReference type="PDBsum" id="6TQN"/>
<dbReference type="PDBsum" id="6TQO"/>
<dbReference type="PDBsum" id="6UTV"/>
<dbReference type="PDBsum" id="6UTW"/>
<dbReference type="PDBsum" id="6UTX"/>
<dbReference type="PDBsum" id="6UTY"/>
<dbReference type="PDBsum" id="6UTZ"/>
<dbReference type="PDBsum" id="6UU0"/>
<dbReference type="PDBsum" id="6UU1"/>
<dbReference type="PDBsum" id="6UU2"/>
<dbReference type="PDBsum" id="6UU3"/>
<dbReference type="PDBsum" id="6UU4"/>
<dbReference type="PDBsum" id="6UU5"/>
<dbReference type="PDBsum" id="6UU6"/>
<dbReference type="PDBsum" id="6UU7"/>
<dbReference type="PDBsum" id="6UU8"/>
<dbReference type="PDBsum" id="6UU9"/>
<dbReference type="PDBsum" id="6UUA"/>
<dbReference type="PDBsum" id="6UUB"/>
<dbReference type="PDBsum" id="6UUC"/>
<dbReference type="PDBsum" id="6VJS"/>
<dbReference type="PDBsum" id="6VU3"/>
<dbReference type="PDBsum" id="6VYQ"/>
<dbReference type="PDBsum" id="6VYR"/>
<dbReference type="PDBsum" id="6VYS"/>
<dbReference type="PDBsum" id="6VYT"/>
<dbReference type="PDBsum" id="6VYU"/>
<dbReference type="PDBsum" id="6VYW"/>
<dbReference type="PDBsum" id="6VYX"/>
<dbReference type="PDBsum" id="6VYY"/>
<dbReference type="PDBsum" id="6VYZ"/>
<dbReference type="PDBsum" id="6VZ2"/>
<dbReference type="PDBsum" id="6VZ3"/>
<dbReference type="PDBsum" id="6VZ5"/>
<dbReference type="PDBsum" id="6VZ7"/>
<dbReference type="PDBsum" id="6VZJ"/>
<dbReference type="PDBsum" id="6WMU"/>
<dbReference type="PDBsum" id="6X26"/>
<dbReference type="PDBsum" id="6X2F"/>
<dbReference type="PDBsum" id="6X2N"/>
<dbReference type="PDBsum" id="6X43"/>
<dbReference type="PDBsum" id="6X4W"/>
<dbReference type="PDBsum" id="6X4Y"/>
<dbReference type="PDBsum" id="6X50"/>
<dbReference type="PDBsum" id="6X6T"/>
<dbReference type="PDBsum" id="6X7F"/>
<dbReference type="PDBsum" id="6X7K"/>
<dbReference type="PDBsum" id="6X9Q"/>
<dbReference type="PDBsum" id="6XAS"/>
<dbReference type="PDBsum" id="6XAV"/>
<dbReference type="PDBsum" id="6XDQ"/>
<dbReference type="PDBsum" id="6XDR"/>
<dbReference type="PDBsum" id="6XGF"/>
<dbReference type="PDBsum" id="6XH7"/>
<dbReference type="PDBsum" id="6XH8"/>
<dbReference type="PDBsum" id="6XII"/>
<dbReference type="PDBsum" id="6XIJ"/>
<dbReference type="PDBsum" id="6XL5"/>
<dbReference type="PDBsum" id="6XL9"/>
<dbReference type="PDBsum" id="6XLJ"/>
<dbReference type="PDBsum" id="6XLL"/>
<dbReference type="PDBsum" id="6XLM"/>
<dbReference type="PDBsum" id="6XLN"/>
<dbReference type="PDBsum" id="6Z9P"/>
<dbReference type="PDBsum" id="6Z9Q"/>
<dbReference type="PDBsum" id="6Z9R"/>
<dbReference type="PDBsum" id="6Z9S"/>
<dbReference type="PDBsum" id="6Z9T"/>
<dbReference type="PDBsum" id="6ZTJ"/>
<dbReference type="PDBsum" id="6ZTL"/>
<dbReference type="PDBsum" id="6ZTM"/>
<dbReference type="PDBsum" id="6ZTN"/>
<dbReference type="PDBsum" id="6ZTO"/>
<dbReference type="PDBsum" id="6ZTP"/>
<dbReference type="PDBsum" id="6ZU1"/>
<dbReference type="PDBsum" id="7ADB"/>
<dbReference type="PDBsum" id="7ADC"/>
<dbReference type="PDBsum" id="7ADD"/>
<dbReference type="PDBsum" id="7ADE"/>
<dbReference type="PDBsum" id="7BEF"/>
<dbReference type="PDBsum" id="7BEG"/>
<dbReference type="PDBsum" id="7C17"/>
<dbReference type="PDBsum" id="7C97"/>
<dbReference type="PDBsum" id="7CHW"/>
<dbReference type="PDBsum" id="7DY6"/>
<dbReference type="PDBsum" id="7KHB"/>
<dbReference type="PDBsum" id="7KHC"/>
<dbReference type="PDBsum" id="7KHE"/>
<dbReference type="PDBsum" id="7KHI"/>
<dbReference type="PDBsum" id="7M8E"/>
<dbReference type="PDBsum" id="7MKD"/>
<dbReference type="PDBsum" id="7MKE"/>
<dbReference type="PDBsum" id="7MKI"/>
<dbReference type="PDBsum" id="7MKJ"/>
<dbReference type="PDBsum" id="7MKN"/>
<dbReference type="PDBsum" id="7MKO"/>
<dbReference type="PDBsum" id="7MKP"/>
<dbReference type="PDBsum" id="7MKQ"/>
<dbReference type="PDBsum" id="7N4E"/>
<dbReference type="PDBsum" id="7PY0"/>
<dbReference type="PDBsum" id="7PY1"/>
<dbReference type="PDBsum" id="7PY3"/>
<dbReference type="PDBsum" id="7PY5"/>
<dbReference type="PDBsum" id="7PY6"/>
<dbReference type="PDBsum" id="7PY7"/>
<dbReference type="PDBsum" id="7PY8"/>
<dbReference type="PDBsum" id="7PYJ"/>
<dbReference type="PDBsum" id="7PYK"/>
<dbReference type="PDBsum" id="7Q0J"/>
<dbReference type="PDBsum" id="7Q0K"/>
<dbReference type="PDBsum" id="7QV9"/>
<dbReference type="PDBsum" id="7QWP"/>
<dbReference type="PDBsum" id="7QXI"/>
<dbReference type="PDBsum" id="7SZJ"/>
<dbReference type="PDBsum" id="7SZK"/>
<dbReference type="PDBsum" id="7UBM"/>
<dbReference type="PDBsum" id="7UBN"/>
<dbReference type="PDBsum" id="7UWE"/>
<dbReference type="PDBsum" id="7UWH"/>
<dbReference type="PDBsum" id="7VWY"/>
<dbReference type="PDBsum" id="7VWZ"/>
<dbReference type="PDBsum" id="7W5W"/>
<dbReference type="PDBsum" id="7W5X"/>
<dbReference type="PDBsum" id="7W5Y"/>
<dbReference type="PDBsum" id="7XUE"/>
<dbReference type="PDBsum" id="7XUG"/>
<dbReference type="PDBsum" id="7XUI"/>
<dbReference type="PDBsum" id="7YP9"/>
<dbReference type="PDBsum" id="7YPA"/>
<dbReference type="PDBsum" id="7YPB"/>
<dbReference type="PDBsum" id="8ABY"/>
<dbReference type="PDBsum" id="8ABZ"/>
<dbReference type="PDBsum" id="8AC0"/>
<dbReference type="PDBsum" id="8AC1"/>
<dbReference type="PDBsum" id="8AC2"/>
<dbReference type="PDBsum" id="8ACP"/>
<dbReference type="PDBsum" id="8AD1"/>
<dbReference type="PDBsum" id="8E3F"/>
<dbReference type="PDBsum" id="8E5K"/>
<dbReference type="PDBsum" id="8E5O"/>
<dbReference type="PDBsum" id="8E6X"/>
<dbReference type="PDBsum" id="8E6Z"/>
<dbReference type="PDBsum" id="8EG7"/>
<dbReference type="PDBsum" id="8EG8"/>
<dbReference type="PDBsum" id="8EGB"/>
<dbReference type="PDBsum" id="8EH8"/>
<dbReference type="PDBsum" id="8EH9"/>
<dbReference type="PDBsum" id="8EHA"/>
<dbReference type="PDBsum" id="8EHF"/>
<dbReference type="PDBsum" id="8EHI"/>
<dbReference type="PDBsum" id="8F1I"/>
<dbReference type="PDBsum" id="8F1J"/>
<dbReference type="PDBsum" id="8F1K"/>
<dbReference type="PDBsum" id="8F3C"/>
<dbReference type="PDBsum" id="8FIX"/>
<dbReference type="PDBsum" id="8FIY"/>
<dbReference type="PDBsum" id="8FTD"/>
<dbReference type="PDBsum" id="8FVR"/>
<dbReference type="PDBsum" id="8FVW"/>
<dbReference type="PDBsum" id="8G00"/>
<dbReference type="PDBsum" id="8G1S"/>
<dbReference type="PDBsum" id="8G2W"/>
<dbReference type="PDBsum" id="8G4W"/>
<dbReference type="PDBsum" id="8G7E"/>
<dbReference type="PDBsum" id="8G8Z"/>
<dbReference type="PDBsum" id="8HKC"/>
<dbReference type="PDBsum" id="8IGR"/>
<dbReference type="PDBsum" id="8IGS"/>
<dbReference type="PDBsum" id="8JO2"/>
<dbReference type="PDBsum" id="8K58"/>
<dbReference type="PDBsum" id="8K59"/>
<dbReference type="PDBsum" id="8K5A"/>
<dbReference type="PDBsum" id="8PBL"/>
<dbReference type="PDBsum" id="8PDY"/>
<dbReference type="PDBsum" id="8PEN"/>
<dbReference type="PDBsum" id="8PFG"/>
<dbReference type="PDBsum" id="8PFJ"/>
<dbReference type="PDBsum" id="8PH9"/>
<dbReference type="PDBsum" id="8PHK"/>
<dbReference type="PDBsum" id="8PIB"/>
<dbReference type="PDBsum" id="8PID"/>
<dbReference type="PDBsum" id="8PIL"/>
<dbReference type="PDBsum" id="8PIM"/>
<dbReference type="PDBsum" id="8RE4"/>
<dbReference type="PDBsum" id="8REA"/>
<dbReference type="PDBsum" id="8REB"/>
<dbReference type="PDBsum" id="8REC"/>
<dbReference type="PDBsum" id="8RED"/>
<dbReference type="PDBsum" id="8REE"/>
<dbReference type="PDBsum" id="8SY5"/>
<dbReference type="PDBsum" id="8SY6"/>
<dbReference type="PDBsum" id="8SY7"/>
<dbReference type="PDBsum" id="8TO1"/>
<dbReference type="PDBsum" id="8TO6"/>
<dbReference type="PDBsum" id="8TO8"/>
<dbReference type="PDBsum" id="8TOE"/>
<dbReference type="PDBsum" id="8TOM"/>
<dbReference type="PDBsum" id="8TXO"/>
<dbReference type="PDBsum" id="8U3B"/>
<dbReference type="PDBsum" id="8UPO"/>
<dbReference type="PDBsum" id="8UPR"/>
<dbReference type="PDBsum" id="8UQL"/>
<dbReference type="PDBsum" id="8UQM"/>
<dbReference type="PDBsum" id="8UQP"/>
<dbReference type="PDBsum" id="8UR0"/>
<dbReference type="PDBsum" id="8URH"/>
<dbReference type="PDBsum" id="8URI"/>
<dbReference type="PDBsum" id="8URX"/>
<dbReference type="PDBsum" id="8URY"/>
<dbReference type="PDBsum" id="8Y6U"/>
<dbReference type="PDBsum" id="9DR1"/>
<dbReference type="PDBsum" id="9GUR"/>
<dbReference type="PDBsum" id="9GUW"/>
<dbReference type="PDBsum" id="9GUX"/>
<dbReference type="PDBsum" id="9Q96"/>
<dbReference type="EMDB" id="EMD-0001"/>
<dbReference type="EMDB" id="EMD-0002"/>
<dbReference type="EMDB" id="EMD-0348"/>
<dbReference type="EMDB" id="EMD-0349"/>
<dbReference type="EMDB" id="EMD-0700"/>
<dbReference type="EMDB" id="EMD-0874"/>
<dbReference type="EMDB" id="EMD-11722"/>
<dbReference type="EMDB" id="EMD-11723"/>
<dbReference type="EMDB" id="EMD-11724"/>
<dbReference type="EMDB" id="EMD-12156"/>
<dbReference type="EMDB" id="EMD-14171"/>
<dbReference type="EMDB" id="EMD-14190"/>
<dbReference type="EMDB" id="EMD-14200"/>
<dbReference type="EMDB" id="EMD-17626"/>
<dbReference type="EMDB" id="EMD-17632"/>
<dbReference type="EMDB" id="EMD-17646"/>
<dbReference type="EMDB" id="EMD-17647"/>
<dbReference type="EMDB" id="EMD-17657"/>
<dbReference type="EMDB" id="EMD-17668"/>
<dbReference type="EMDB" id="EMD-17679"/>
<dbReference type="EMDB" id="EMD-17681"/>
<dbReference type="EMDB" id="EMD-17685"/>
<dbReference type="EMDB" id="EMD-17686"/>
<dbReference type="EMDB" id="EMD-19079"/>
<dbReference type="EMDB" id="EMD-19080"/>
<dbReference type="EMDB" id="EMD-19081"/>
<dbReference type="EMDB" id="EMD-19082"/>
<dbReference type="EMDB" id="EMD-19083"/>
<dbReference type="EMDB" id="EMD-19084"/>
<dbReference type="EMDB" id="EMD-20090"/>
<dbReference type="EMDB" id="EMD-20233"/>
<dbReference type="EMDB" id="EMD-20234"/>
<dbReference type="EMDB" id="EMD-20460"/>
<dbReference type="EMDB" id="EMD-20461"/>
<dbReference type="EMDB" id="EMD-20462"/>
<dbReference type="EMDB" id="EMD-20463"/>
<dbReference type="EMDB" id="EMD-20464"/>
<dbReference type="EMDB" id="EMD-20465"/>
<dbReference type="EMDB" id="EMD-20466"/>
<dbReference type="EMDB" id="EMD-21853"/>
<dbReference type="EMDB" id="EMD-21879"/>
<dbReference type="EMDB" id="EMD-21881"/>
<dbReference type="EMDB" id="EMD-21883"/>
<dbReference type="EMDB" id="EMD-22114"/>
<dbReference type="EMDB" id="EMD-22115"/>
<dbReference type="EMDB" id="EMD-25570"/>
<dbReference type="EMDB" id="EMD-25571"/>
<dbReference type="EMDB" id="EMD-26438"/>
<dbReference type="EMDB" id="EMD-26439"/>
<dbReference type="EMDB" id="EMD-26830"/>
<dbReference type="EMDB" id="EMD-26832"/>
<dbReference type="EMDB" id="EMD-27864"/>
<dbReference type="EMDB" id="EMD-27913"/>
<dbReference type="EMDB" id="EMD-27916"/>
<dbReference type="EMDB" id="EMD-27930"/>
<dbReference type="EMDB" id="EMD-27931"/>
<dbReference type="EMDB" id="EMD-28783"/>
<dbReference type="EMDB" id="EMD-28786"/>
<dbReference type="EMDB" id="EMD-28792"/>
<dbReference type="EMDB" id="EMD-29212"/>
<dbReference type="EMDB" id="EMD-29213"/>
<dbReference type="EMDB" id="EMD-29423"/>
<dbReference type="EMDB" id="EMD-29491"/>
<dbReference type="EMDB" id="EMD-29494"/>
<dbReference type="EMDB" id="EMD-30268"/>
<dbReference type="EMDB" id="EMD-30914"/>
<dbReference type="EMDB" id="EMD-32165"/>
<dbReference type="EMDB" id="EMD-32166"/>
<dbReference type="EMDB" id="EMD-32322"/>
<dbReference type="EMDB" id="EMD-32323"/>
<dbReference type="EMDB" id="EMD-32324"/>
<dbReference type="EMDB" id="EMD-33466"/>
<dbReference type="EMDB" id="EMD-33468"/>
<dbReference type="EMDB" id="EMD-33470"/>
<dbReference type="EMDB" id="EMD-33996"/>
<dbReference type="EMDB" id="EMD-33997"/>
<dbReference type="EMDB" id="EMD-33998"/>
<dbReference type="EMDB" id="EMD-34849"/>
<dbReference type="EMDB" id="EMD-35438"/>
<dbReference type="EMDB" id="EMD-35439"/>
<dbReference type="EMDB" id="EMD-3561"/>
<dbReference type="EMDB" id="EMD-3580"/>
<dbReference type="EMDB" id="EMD-36897"/>
<dbReference type="EMDB" id="EMD-36898"/>
<dbReference type="EMDB" id="EMD-36899"/>
<dbReference type="EMDB" id="EMD-3695"/>
<dbReference type="EMDB" id="EMD-3696"/>
<dbReference type="EMDB" id="EMD-39001"/>
<dbReference type="EMDB" id="EMD-40862"/>
<dbReference type="EMDB" id="EMD-40863"/>
<dbReference type="EMDB" id="EMD-40864"/>
<dbReference type="EMDB" id="EMD-41433"/>
<dbReference type="EMDB" id="EMD-41437"/>
<dbReference type="EMDB" id="EMD-41439"/>
<dbReference type="EMDB" id="EMD-41448"/>
<dbReference type="EMDB" id="EMD-41456"/>
<dbReference type="EMDB" id="EMD-41695"/>
<dbReference type="EMDB" id="EMD-41856"/>
<dbReference type="EMDB" id="EMD-42453"/>
<dbReference type="EMDB" id="EMD-42454"/>
<dbReference type="EMDB" id="EMD-42473"/>
<dbReference type="EMDB" id="EMD-42474"/>
<dbReference type="EMDB" id="EMD-42477"/>
<dbReference type="EMDB" id="EMD-42479"/>
<dbReference type="EMDB" id="EMD-42492"/>
<dbReference type="EMDB" id="EMD-42493"/>
<dbReference type="EMDB" id="EMD-42503"/>
<dbReference type="EMDB" id="EMD-42504"/>
<dbReference type="EMDB" id="EMD-4274"/>
<dbReference type="EMDB" id="EMD-4275"/>
<dbReference type="EMDB" id="EMD-4397"/>
<dbReference type="EMDB" id="EMD-4769"/>
<dbReference type="EMDB" id="EMD-4770"/>
<dbReference type="EMDB" id="EMD-4882"/>
<dbReference type="EMDB" id="EMD-4885"/>
<dbReference type="EMDB" id="EMD-4886"/>
<dbReference type="EMDB" id="EMD-4892"/>
<dbReference type="EMDB" id="EMD-4893"/>
<dbReference type="EMDB" id="EMD-51617"/>
<dbReference type="EMDB" id="EMD-52919"/>
<dbReference type="EMDB" id="EMD-7002"/>
<dbReference type="EMDB" id="EMD-7103"/>
<dbReference type="EMDB" id="EMD-7349"/>
<dbReference type="EMDB" id="EMD-7350"/>
<dbReference type="EMDB" id="EMD-7351"/>
<dbReference type="EMDB" id="EMD-7438"/>
<dbReference type="EMDB" id="EMD-7439"/>
<dbReference type="EMDB" id="EMD-8584"/>
<dbReference type="EMDB" id="EMD-8586"/>
<dbReference type="EMDB" id="EMD-8732"/>
<dbReference type="EMDB" id="EMD-9792"/>
<dbReference type="EMDB" id="EMD-9852"/>
<dbReference type="EMDB" id="EMD-9916"/>
<dbReference type="SMR" id="P0A8T7"/>
<dbReference type="BioGRID" id="4262959">
    <property type="interactions" value="124"/>
</dbReference>
<dbReference type="BioGRID" id="852781">
    <property type="interactions" value="2"/>
</dbReference>
<dbReference type="ComplexPortal" id="CPX-4881">
    <property type="entry name" value="DNA-directed RNA polymerase holoenzyme complex, Sigma70 variant"/>
</dbReference>
<dbReference type="ComplexPortal" id="CPX-4883">
    <property type="entry name" value="DNA-directed RNA polymerase holoenzyme complex, SigmaS variant"/>
</dbReference>
<dbReference type="ComplexPortal" id="CPX-4884">
    <property type="entry name" value="DNA-directed RNA polymerase holoenzyme complex, Sigma54 variant"/>
</dbReference>
<dbReference type="ComplexPortal" id="CPX-4885">
    <property type="entry name" value="DNA-directed RNA polymerase holoenzyme complex, SigmaE variant"/>
</dbReference>
<dbReference type="ComplexPortal" id="CPX-4886">
    <property type="entry name" value="DNA-directed RNA polymerase holoenzyme complex, SigmaF variant"/>
</dbReference>
<dbReference type="ComplexPortal" id="CPX-4887">
    <property type="entry name" value="DNA-directed RNA polymerase holoenzyme complex, SigmaH variant"/>
</dbReference>
<dbReference type="ComplexPortal" id="CPX-4888">
    <property type="entry name" value="DNA-directed RNA polymerase holoenzyme complex, Sigma fecI variant"/>
</dbReference>
<dbReference type="ComplexPortal" id="CPX-5674">
    <property type="entry name" value="Transcription elongation complex"/>
</dbReference>
<dbReference type="ComplexPortal" id="CPX-5780">
    <property type="entry name" value="lambdaN-dependent processive transcription antitermination complex"/>
</dbReference>
<dbReference type="DIP" id="DIP-35803N"/>
<dbReference type="FunCoup" id="P0A8T7">
    <property type="interactions" value="1006"/>
</dbReference>
<dbReference type="IntAct" id="P0A8T7">
    <property type="interactions" value="117"/>
</dbReference>
<dbReference type="MINT" id="P0A8T7"/>
<dbReference type="STRING" id="511145.b3988"/>
<dbReference type="BindingDB" id="P0A8T7"/>
<dbReference type="ChEMBL" id="CHEMBL2364672"/>
<dbReference type="ChEMBL" id="CHEMBL4296169"/>
<dbReference type="DrugBank" id="DB00615">
    <property type="generic name" value="Rifabutin"/>
</dbReference>
<dbReference type="DrugBank" id="DB11753">
    <property type="generic name" value="Rifamycin"/>
</dbReference>
<dbReference type="DrugCentral" id="P0A8T7"/>
<dbReference type="iPTMnet" id="P0A8T7"/>
<dbReference type="jPOST" id="P0A8T7"/>
<dbReference type="PaxDb" id="511145-b3988"/>
<dbReference type="ABCD" id="P0A8T7">
    <property type="antibodies" value="1 sequenced antibody"/>
</dbReference>
<dbReference type="EnsemblBacteria" id="AAC76962">
    <property type="protein sequence ID" value="AAC76962"/>
    <property type="gene ID" value="b3988"/>
</dbReference>
<dbReference type="GeneID" id="93777906"/>
<dbReference type="GeneID" id="948487"/>
<dbReference type="KEGG" id="ecj:JW3951"/>
<dbReference type="KEGG" id="eco:b3988"/>
<dbReference type="KEGG" id="ecoc:C3026_21540"/>
<dbReference type="PATRIC" id="fig|1411691.4.peg.2724"/>
<dbReference type="EchoBASE" id="EB0888"/>
<dbReference type="eggNOG" id="COG0086">
    <property type="taxonomic scope" value="Bacteria"/>
</dbReference>
<dbReference type="HOGENOM" id="CLU_000524_3_1_6"/>
<dbReference type="InParanoid" id="P0A8T7"/>
<dbReference type="OMA" id="QDMIIGL"/>
<dbReference type="OrthoDB" id="9815296at2"/>
<dbReference type="PhylomeDB" id="P0A8T7"/>
<dbReference type="BioCyc" id="EcoCyc:RPOC-MONOMER"/>
<dbReference type="BioCyc" id="MetaCyc:RPOC-MONOMER"/>
<dbReference type="BRENDA" id="2.7.7.6">
    <property type="organism ID" value="2026"/>
</dbReference>
<dbReference type="CD-CODE" id="7C5C94C0">
    <property type="entry name" value="Transcriptional condensates"/>
</dbReference>
<dbReference type="EvolutionaryTrace" id="P0A8T7"/>
<dbReference type="PRO" id="PR:P0A8T7"/>
<dbReference type="Proteomes" id="UP000000625">
    <property type="component" value="Chromosome"/>
</dbReference>
<dbReference type="GO" id="GO:0005737">
    <property type="term" value="C:cytoplasm"/>
    <property type="evidence" value="ECO:0007005"/>
    <property type="project" value="UniProtKB"/>
</dbReference>
<dbReference type="GO" id="GO:0005829">
    <property type="term" value="C:cytosol"/>
    <property type="evidence" value="ECO:0000314"/>
    <property type="project" value="EcoCyc"/>
</dbReference>
<dbReference type="GO" id="GO:0000345">
    <property type="term" value="C:cytosolic DNA-directed RNA polymerase complex"/>
    <property type="evidence" value="ECO:0000353"/>
    <property type="project" value="ComplexPortal"/>
</dbReference>
<dbReference type="GO" id="GO:0016020">
    <property type="term" value="C:membrane"/>
    <property type="evidence" value="ECO:0007005"/>
    <property type="project" value="UniProtKB"/>
</dbReference>
<dbReference type="GO" id="GO:0008023">
    <property type="term" value="C:transcription elongation factor complex"/>
    <property type="evidence" value="ECO:0000303"/>
    <property type="project" value="ComplexPortal"/>
</dbReference>
<dbReference type="GO" id="GO:0003677">
    <property type="term" value="F:DNA binding"/>
    <property type="evidence" value="ECO:0007669"/>
    <property type="project" value="UniProtKB-UniRule"/>
</dbReference>
<dbReference type="GO" id="GO:0003899">
    <property type="term" value="F:DNA-directed RNA polymerase activity"/>
    <property type="evidence" value="ECO:0007669"/>
    <property type="project" value="UniProtKB-UniRule"/>
</dbReference>
<dbReference type="GO" id="GO:0000287">
    <property type="term" value="F:magnesium ion binding"/>
    <property type="evidence" value="ECO:0007669"/>
    <property type="project" value="UniProtKB-UniRule"/>
</dbReference>
<dbReference type="GO" id="GO:0008270">
    <property type="term" value="F:zinc ion binding"/>
    <property type="evidence" value="ECO:0007669"/>
    <property type="project" value="UniProtKB-UniRule"/>
</dbReference>
<dbReference type="GO" id="GO:0044780">
    <property type="term" value="P:bacterial-type flagellum assembly"/>
    <property type="evidence" value="ECO:0000303"/>
    <property type="project" value="ComplexPortal"/>
</dbReference>
<dbReference type="GO" id="GO:0071973">
    <property type="term" value="P:bacterial-type flagellum-dependent cell motility"/>
    <property type="evidence" value="ECO:0000303"/>
    <property type="project" value="ComplexPortal"/>
</dbReference>
<dbReference type="GO" id="GO:0048870">
    <property type="term" value="P:cell motility"/>
    <property type="evidence" value="ECO:0000303"/>
    <property type="project" value="ComplexPortal"/>
</dbReference>
<dbReference type="GO" id="GO:0036460">
    <property type="term" value="P:cellular response to cell envelope stress"/>
    <property type="evidence" value="ECO:0000303"/>
    <property type="project" value="ComplexPortal"/>
</dbReference>
<dbReference type="GO" id="GO:0006352">
    <property type="term" value="P:DNA-templated transcription initiation"/>
    <property type="evidence" value="ECO:0000314"/>
    <property type="project" value="ComplexPortal"/>
</dbReference>
<dbReference type="GO" id="GO:0006879">
    <property type="term" value="P:intracellular iron ion homeostasis"/>
    <property type="evidence" value="ECO:0000303"/>
    <property type="project" value="ComplexPortal"/>
</dbReference>
<dbReference type="GO" id="GO:0042128">
    <property type="term" value="P:nitrate assimilation"/>
    <property type="evidence" value="ECO:0000303"/>
    <property type="project" value="ComplexPortal"/>
</dbReference>
<dbReference type="GO" id="GO:0032784">
    <property type="term" value="P:regulation of DNA-templated transcription elongation"/>
    <property type="evidence" value="ECO:0000303"/>
    <property type="project" value="ComplexPortal"/>
</dbReference>
<dbReference type="GO" id="GO:2000142">
    <property type="term" value="P:regulation of DNA-templated transcription initiation"/>
    <property type="evidence" value="ECO:0000314"/>
    <property type="project" value="ComplexPortal"/>
</dbReference>
<dbReference type="GO" id="GO:0046677">
    <property type="term" value="P:response to antibiotic"/>
    <property type="evidence" value="ECO:0007669"/>
    <property type="project" value="UniProtKB-KW"/>
</dbReference>
<dbReference type="GO" id="GO:0009408">
    <property type="term" value="P:response to heat"/>
    <property type="evidence" value="ECO:0000303"/>
    <property type="project" value="ComplexPortal"/>
</dbReference>
<dbReference type="GO" id="GO:0090605">
    <property type="term" value="P:submerged biofilm formation"/>
    <property type="evidence" value="ECO:0000303"/>
    <property type="project" value="ComplexPortal"/>
</dbReference>
<dbReference type="GO" id="GO:0031564">
    <property type="term" value="P:transcription antitermination"/>
    <property type="evidence" value="ECO:0000314"/>
    <property type="project" value="ComplexPortal"/>
</dbReference>
<dbReference type="CDD" id="cd02655">
    <property type="entry name" value="RNAP_beta'_C"/>
    <property type="match status" value="1"/>
</dbReference>
<dbReference type="CDD" id="cd01609">
    <property type="entry name" value="RNAP_beta'_N"/>
    <property type="match status" value="1"/>
</dbReference>
<dbReference type="FunFam" id="1.10.132.30:FF:000003">
    <property type="entry name" value="DNA-directed RNA polymerase subunit beta"/>
    <property type="match status" value="1"/>
</dbReference>
<dbReference type="FunFam" id="1.10.150.390:FF:000002">
    <property type="entry name" value="DNA-directed RNA polymerase subunit beta"/>
    <property type="match status" value="1"/>
</dbReference>
<dbReference type="FunFam" id="1.10.274.100:FF:000002">
    <property type="entry name" value="DNA-directed RNA polymerase subunit beta"/>
    <property type="match status" value="1"/>
</dbReference>
<dbReference type="FunFam" id="1.10.40.90:FF:000001">
    <property type="entry name" value="DNA-directed RNA polymerase subunit beta"/>
    <property type="match status" value="1"/>
</dbReference>
<dbReference type="FunFam" id="2.40.50.100:FF:000012">
    <property type="entry name" value="DNA-directed RNA polymerase subunit beta"/>
    <property type="match status" value="1"/>
</dbReference>
<dbReference type="FunFam" id="2.40.50.100:FF:000016">
    <property type="entry name" value="DNA-directed RNA polymerase subunit beta"/>
    <property type="match status" value="1"/>
</dbReference>
<dbReference type="FunFam" id="2.40.50.100:FF:000019">
    <property type="entry name" value="DNA-directed RNA polymerase subunit beta"/>
    <property type="match status" value="1"/>
</dbReference>
<dbReference type="FunFam" id="4.10.860.120:FF:000001">
    <property type="entry name" value="DNA-directed RNA polymerase subunit beta"/>
    <property type="match status" value="1"/>
</dbReference>
<dbReference type="Gene3D" id="1.10.132.30">
    <property type="match status" value="1"/>
</dbReference>
<dbReference type="Gene3D" id="1.10.150.390">
    <property type="match status" value="1"/>
</dbReference>
<dbReference type="Gene3D" id="1.10.1790.20">
    <property type="match status" value="1"/>
</dbReference>
<dbReference type="Gene3D" id="1.10.40.90">
    <property type="match status" value="1"/>
</dbReference>
<dbReference type="Gene3D" id="2.40.40.20">
    <property type="match status" value="1"/>
</dbReference>
<dbReference type="Gene3D" id="2.40.50.100">
    <property type="match status" value="3"/>
</dbReference>
<dbReference type="Gene3D" id="4.10.860.120">
    <property type="entry name" value="RNA polymerase II, clamp domain"/>
    <property type="match status" value="1"/>
</dbReference>
<dbReference type="Gene3D" id="1.10.274.100">
    <property type="entry name" value="RNA polymerase Rpb1, domain 3"/>
    <property type="match status" value="1"/>
</dbReference>
<dbReference type="HAMAP" id="MF_01322">
    <property type="entry name" value="RNApol_bact_RpoC"/>
    <property type="match status" value="1"/>
</dbReference>
<dbReference type="InterPro" id="IPR045867">
    <property type="entry name" value="DNA-dir_RpoC_beta_prime"/>
</dbReference>
<dbReference type="InterPro" id="IPR012754">
    <property type="entry name" value="DNA-dir_RpoC_beta_prime_bact"/>
</dbReference>
<dbReference type="InterPro" id="IPR000722">
    <property type="entry name" value="RNA_pol_asu"/>
</dbReference>
<dbReference type="InterPro" id="IPR006592">
    <property type="entry name" value="RNA_pol_N"/>
</dbReference>
<dbReference type="InterPro" id="IPR007080">
    <property type="entry name" value="RNA_pol_Rpb1_1"/>
</dbReference>
<dbReference type="InterPro" id="IPR007066">
    <property type="entry name" value="RNA_pol_Rpb1_3"/>
</dbReference>
<dbReference type="InterPro" id="IPR042102">
    <property type="entry name" value="RNA_pol_Rpb1_3_sf"/>
</dbReference>
<dbReference type="InterPro" id="IPR007083">
    <property type="entry name" value="RNA_pol_Rpb1_4"/>
</dbReference>
<dbReference type="InterPro" id="IPR007081">
    <property type="entry name" value="RNA_pol_Rpb1_5"/>
</dbReference>
<dbReference type="InterPro" id="IPR044893">
    <property type="entry name" value="RNA_pol_Rpb1_clamp_domain"/>
</dbReference>
<dbReference type="InterPro" id="IPR038120">
    <property type="entry name" value="Rpb1_funnel_sf"/>
</dbReference>
<dbReference type="NCBIfam" id="TIGR02386">
    <property type="entry name" value="rpoC_TIGR"/>
    <property type="match status" value="1"/>
</dbReference>
<dbReference type="PANTHER" id="PTHR19376">
    <property type="entry name" value="DNA-DIRECTED RNA POLYMERASE"/>
    <property type="match status" value="1"/>
</dbReference>
<dbReference type="PANTHER" id="PTHR19376:SF54">
    <property type="entry name" value="DNA-DIRECTED RNA POLYMERASE SUBUNIT BETA"/>
    <property type="match status" value="1"/>
</dbReference>
<dbReference type="Pfam" id="PF04997">
    <property type="entry name" value="RNA_pol_Rpb1_1"/>
    <property type="match status" value="1"/>
</dbReference>
<dbReference type="Pfam" id="PF00623">
    <property type="entry name" value="RNA_pol_Rpb1_2"/>
    <property type="match status" value="2"/>
</dbReference>
<dbReference type="Pfam" id="PF04983">
    <property type="entry name" value="RNA_pol_Rpb1_3"/>
    <property type="match status" value="1"/>
</dbReference>
<dbReference type="Pfam" id="PF05000">
    <property type="entry name" value="RNA_pol_Rpb1_4"/>
    <property type="match status" value="1"/>
</dbReference>
<dbReference type="Pfam" id="PF04998">
    <property type="entry name" value="RNA_pol_Rpb1_5"/>
    <property type="match status" value="1"/>
</dbReference>
<dbReference type="SMART" id="SM00663">
    <property type="entry name" value="RPOLA_N"/>
    <property type="match status" value="1"/>
</dbReference>
<dbReference type="SUPFAM" id="SSF64484">
    <property type="entry name" value="beta and beta-prime subunits of DNA dependent RNA-polymerase"/>
    <property type="match status" value="1"/>
</dbReference>
<gene>
    <name evidence="1" type="primary">rpoC</name>
    <name type="synonym">tabB</name>
    <name type="ordered locus">b3988</name>
    <name type="ordered locus">JW3951</name>
</gene>
<protein>
    <recommendedName>
        <fullName evidence="1">DNA-directed RNA polymerase subunit beta'</fullName>
        <shortName evidence="1">RNAP subunit beta'</shortName>
        <ecNumber evidence="1">2.7.7.6</ecNumber>
    </recommendedName>
    <alternativeName>
        <fullName evidence="1">RNA polymerase subunit beta'</fullName>
    </alternativeName>
    <alternativeName>
        <fullName evidence="1">Transcriptase subunit beta'</fullName>
    </alternativeName>
</protein>
<keyword id="KW-0002">3D-structure</keyword>
<keyword id="KW-0007">Acetylation</keyword>
<keyword id="KW-0046">Antibiotic resistance</keyword>
<keyword id="KW-0903">Direct protein sequencing</keyword>
<keyword id="KW-0240">DNA-directed RNA polymerase</keyword>
<keyword id="KW-0460">Magnesium</keyword>
<keyword id="KW-0479">Metal-binding</keyword>
<keyword id="KW-0548">Nucleotidyltransferase</keyword>
<keyword id="KW-1185">Reference proteome</keyword>
<keyword id="KW-0804">Transcription</keyword>
<keyword id="KW-0808">Transferase</keyword>
<keyword id="KW-0862">Zinc</keyword>
<reference key="1">
    <citation type="journal article" date="1982" name="Nucleic Acids Res.">
        <title>The primary structure of E. coli RNA polymerase, Nucleotide sequence of the rpoC gene and amino acid sequence of the beta'-subunit.</title>
        <authorList>
            <person name="Ovchinnikov Y.A."/>
            <person name="Monastyrskaya G.S."/>
            <person name="Gubanov V.V."/>
            <person name="Guryev S.O."/>
            <person name="Salomatina I.S."/>
            <person name="Shuvaeva T.M."/>
            <person name="Lipkin V.M."/>
            <person name="Sverdlov E.D."/>
        </authorList>
    </citation>
    <scope>NUCLEOTIDE SEQUENCE [GENOMIC DNA]</scope>
    <scope>PROTEIN SEQUENCE OF 1-8</scope>
    <scope>PARTIAL PROTEIN SEQUENCE</scope>
</reference>
<reference key="2">
    <citation type="journal article" date="1993" name="Nucleic Acids Res.">
        <title>Analysis of the Escherichia coli genome. IV. DNA sequence of the region from 89.2 to 92.8 minutes.</title>
        <authorList>
            <person name="Blattner F.R."/>
            <person name="Burland V.D."/>
            <person name="Plunkett G. III"/>
            <person name="Sofia H.J."/>
            <person name="Daniels D.L."/>
        </authorList>
    </citation>
    <scope>NUCLEOTIDE SEQUENCE [LARGE SCALE GENOMIC DNA]</scope>
    <source>
        <strain>K12 / MG1655 / ATCC 47076</strain>
    </source>
</reference>
<reference key="3">
    <citation type="journal article" date="1997" name="Science">
        <title>The complete genome sequence of Escherichia coli K-12.</title>
        <authorList>
            <person name="Blattner F.R."/>
            <person name="Plunkett G. III"/>
            <person name="Bloch C.A."/>
            <person name="Perna N.T."/>
            <person name="Burland V."/>
            <person name="Riley M."/>
            <person name="Collado-Vides J."/>
            <person name="Glasner J.D."/>
            <person name="Rode C.K."/>
            <person name="Mayhew G.F."/>
            <person name="Gregor J."/>
            <person name="Davis N.W."/>
            <person name="Kirkpatrick H.A."/>
            <person name="Goeden M.A."/>
            <person name="Rose D.J."/>
            <person name="Mau B."/>
            <person name="Shao Y."/>
        </authorList>
    </citation>
    <scope>NUCLEOTIDE SEQUENCE [LARGE SCALE GENOMIC DNA]</scope>
    <source>
        <strain>K12 / MG1655 / ATCC 47076</strain>
    </source>
</reference>
<reference key="4">
    <citation type="journal article" date="2006" name="Mol. Syst. Biol.">
        <title>Highly accurate genome sequences of Escherichia coli K-12 strains MG1655 and W3110.</title>
        <authorList>
            <person name="Hayashi K."/>
            <person name="Morooka N."/>
            <person name="Yamamoto Y."/>
            <person name="Fujita K."/>
            <person name="Isono K."/>
            <person name="Choi S."/>
            <person name="Ohtsubo E."/>
            <person name="Baba T."/>
            <person name="Wanner B.L."/>
            <person name="Mori H."/>
            <person name="Horiuchi T."/>
        </authorList>
    </citation>
    <scope>NUCLEOTIDE SEQUENCE [LARGE SCALE GENOMIC DNA]</scope>
    <source>
        <strain>K12 / W3110 / ATCC 27325 / DSM 5911</strain>
    </source>
</reference>
<reference key="5">
    <citation type="journal article" date="1980" name="Bioorg. Khim.">
        <title>Primary structure of EcoRI-F fragment of rpoB, C genes and corresponding fragments of beta- and beta'-subunits of RNA polymerase from E.coli.</title>
        <authorList>
            <person name="Monastyrskaya G.S."/>
            <person name="Gubanov V.V."/>
            <person name="Guryev S.O."/>
            <person name="Lipkin V.M."/>
            <person name="Sverdlov E.D."/>
        </authorList>
    </citation>
    <scope>NUCLEOTIDE SEQUENCE [GENOMIC DNA] OF 1-176</scope>
</reference>
<reference key="6">
    <citation type="journal article" date="1980" name="Bioorg. Khim.">
        <title>Structure of a central part of E.coli operon rpoBC. Nucleotide sequence of the gene for beta subunit of RNA polymerase.</title>
        <authorList>
            <person name="Gurevich A.I."/>
            <person name="Igoshin A.V."/>
            <person name="Kolosov M.N."/>
        </authorList>
    </citation>
    <scope>NUCLEOTIDE SEQUENCE [GENOMIC DNA] OF 1-176</scope>
</reference>
<reference key="7">
    <citation type="journal article" date="1981" name="Eur. J. Biochem.">
        <title>The primary structure of Escherichia coli RNA polymerase. Nucleotide sequence of the rpoB gene and amino-acid sequence of the beta-subunit.</title>
        <authorList>
            <person name="Ovchinnikov Y.A."/>
            <person name="Monastyrskaya G.S."/>
            <person name="Gubanov V.V."/>
            <person name="Guryev S.O."/>
            <person name="Chertov O.Y."/>
            <person name="Modyanov N.N."/>
            <person name="Grinkevich V.A."/>
            <person name="Makarova I.A."/>
            <person name="Marchenko T.V."/>
            <person name="Polovnikova I.N."/>
            <person name="Lipkin V.M."/>
            <person name="Sverdlov E.D."/>
        </authorList>
    </citation>
    <scope>NUCLEOTIDE SEQUENCE [GENOMIC DNA] OF 1-176</scope>
    <scope>PROTEIN SEQUENCE OF 1-8</scope>
</reference>
<reference key="8">
    <citation type="journal article" date="1975" name="FEBS Lett.">
        <title>The subunits of DNA-dependent RNA polymerase from E. coli: I. Amino acid analysis and primary structure of the N-terminal regions.</title>
        <authorList>
            <person name="Fujiki H."/>
            <person name="Zurek G."/>
        </authorList>
    </citation>
    <scope>PROTEIN SEQUENCE OF 1-4</scope>
    <source>
        <strain>K12</strain>
    </source>
</reference>
<reference key="9">
    <citation type="journal article" date="1982" name="Bioorg. Khim.">
        <title>Primary structure of EcoRI-D fragment of rpoC gene and corresponding fragment of beta-subunit of RNA polymerase from E.coli.</title>
        <authorList>
            <person name="Monastyrskaya G.S."/>
            <person name="Guryev S.O."/>
            <person name="Kalinina N.F."/>
            <person name="Sorokin A.V."/>
            <person name="Salomatina I.S."/>
            <person name="Shuvaeva T.M."/>
            <person name="Lipkin V.M."/>
            <person name="Sverdlov E.D."/>
            <person name="Ovchinnikov Y.A."/>
        </authorList>
    </citation>
    <scope>NUCLEOTIDE SEQUENCE [GENOMIC DNA] OF 175-988</scope>
</reference>
<reference key="10">
    <citation type="journal article" date="1981" name="Bioorg. Khim.">
        <title>Primary structure of RNA polymerase from E.coli. Nucleotide sequence of E.coli DNA fragment containing a part of the rpoC gene and the corresponding C-terminal amino acid sequence of beta'-subunit.</title>
        <authorList>
            <person name="Ovchinnikov Y.A."/>
            <person name="Monastyrskaya G.S."/>
            <person name="Gubanov V.V."/>
            <person name="Salomatina I.S."/>
            <person name="Shuvaeva T.M."/>
            <person name="Lipkin V.M."/>
            <person name="Sverdlov E.D."/>
        </authorList>
    </citation>
    <scope>NUCLEOTIDE SEQUENCE [GENOMIC DNA] OF 987-1407</scope>
</reference>
<reference key="11">
    <citation type="journal article" date="1981" name="Nucleic Acids Res.">
        <title>Nucleotide sequence at the end of the gene for the RNA polymerase beta' subunit (rpoC).</title>
        <authorList>
            <person name="Squires C."/>
            <person name="Krainer A."/>
            <person name="Barry G."/>
            <person name="Shen W.-F."/>
            <person name="Squires C.L."/>
        </authorList>
    </citation>
    <scope>NUCLEOTIDE SEQUENCE [GENOMIC DNA] OF 1073-1407</scope>
    <source>
        <strain>K12</strain>
    </source>
</reference>
<reference key="12">
    <citation type="journal article" date="1991" name="Cell">
        <title>Bipartite functional map of the E. coli RNA polymerase alpha subunit: involvement of the C-terminal region in transcription activation by cAMP-CRP.</title>
        <authorList>
            <person name="Igarashi K."/>
            <person name="Ishihama A."/>
        </authorList>
    </citation>
    <scope>FUNCTION IN TRANSCRIPTION</scope>
    <scope>SUBUNIT</scope>
</reference>
<reference key="13">
    <citation type="journal article" date="2009" name="Mol. Cell. Proteomics">
        <title>Lysine acetylation is a highly abundant and evolutionarily conserved modification in Escherichia coli.</title>
        <authorList>
            <person name="Zhang J."/>
            <person name="Sprung R."/>
            <person name="Pei J."/>
            <person name="Tan X."/>
            <person name="Kim S."/>
            <person name="Zhu H."/>
            <person name="Liu C.F."/>
            <person name="Grishin N.V."/>
            <person name="Zhao Y."/>
        </authorList>
    </citation>
    <scope>ACETYLATION [LARGE SCALE ANALYSIS] AT LYS-983</scope>
    <scope>IDENTIFICATION BY MASS SPECTROMETRY</scope>
    <source>
        <strain>K12 / JW1106</strain>
        <strain>K12 / MG1655 / ATCC 47076</strain>
    </source>
</reference>
<reference key="14">
    <citation type="journal article" date="1997" name="Electrophoresis">
        <title>Escherichia coli proteome analysis using the gene-protein database.</title>
        <authorList>
            <person name="VanBogelen R.A."/>
            <person name="Abshire K.Z."/>
            <person name="Moldover B."/>
            <person name="Olson E.R."/>
            <person name="Neidhardt F.C."/>
        </authorList>
    </citation>
    <scope>IDENTIFICATION BY 2D-GEL</scope>
</reference>
<reference key="15">
    <citation type="journal article" date="2011" name="Mol. Microbiol.">
        <title>Involvement of protein acetylation in glucose-induced transcription of a stress-responsive promoter.</title>
        <authorList>
            <person name="Lima B.P."/>
            <person name="Antelmann H."/>
            <person name="Gronau K."/>
            <person name="Chi B.K."/>
            <person name="Becher D."/>
            <person name="Brinsmade S.R."/>
            <person name="Wolfe A.J."/>
        </authorList>
    </citation>
    <scope>ACETYLATION</scope>
</reference>
<reference evidence="10" key="16">
    <citation type="journal article" date="2009" name="Proc. Natl. Acad. Sci. U.S.A.">
        <title>Three-dimensional EM structure of an intact activator-dependent transcription initiation complex.</title>
        <authorList>
            <person name="Hudson B.P."/>
            <person name="Quispe J."/>
            <person name="Lara-Gonzalez S."/>
            <person name="Kim Y."/>
            <person name="Berman H.M."/>
            <person name="Arnold E."/>
            <person name="Ebright R.H."/>
            <person name="Lawson C.L."/>
        </authorList>
    </citation>
    <scope>STRUCTURE BY ELECTRON MICROSCOPY (19.80 ANGSTROMS) IN COMPLEX WITH RPOA; RPOB; RPOD; RPOZ; CRP AND DNA</scope>
    <scope>DNA-BINDING</scope>
    <scope>SUBUNIT</scope>
</reference>
<reference evidence="11 12" key="17">
    <citation type="journal article" date="2014" name="Elife">
        <title>Transcription inhibition by the depsipeptide antibiotic salinamide A.</title>
        <authorList>
            <person name="Degen D."/>
            <person name="Feng Y."/>
            <person name="Zhang Y."/>
            <person name="Ebright K.Y."/>
            <person name="Ebright Y.W."/>
            <person name="Gigliotti M."/>
            <person name="Vahedian-Movahed H."/>
            <person name="Mandal S."/>
            <person name="Talaue M."/>
            <person name="Connell N."/>
            <person name="Arnold E."/>
            <person name="Fenical W."/>
            <person name="Ebright R.H."/>
        </authorList>
    </citation>
    <scope>X-RAY CRYSTALLOGRAPHY (3.90 ANGSTROMS) IN COMPLEX WITH RPOA; RPOB; RPOD; RPOZ; SALINAMIDE A; MAGNESIUM AND ZINC</scope>
    <scope>FUNCTION</scope>
    <scope>COFACTOR</scope>
    <scope>SUBUNIT</scope>
    <scope>BIOTECHNOLOGY</scope>
    <scope>ANTIBIOTIC RESISTANCE</scope>
    <scope>MUTAGENESIS OF GLN-504; ASN-690; MET-697; ALA-735; ARG-738; ALA-748; PRO-758; PHE-763; SER-775; ALA-779; ARG-780; GLY-782 AND LEU-783</scope>
</reference>
<reference evidence="13 14" key="18">
    <citation type="journal article" date="2020" name="Mol. Cell">
        <title>Structure-Based Mechanisms of a Molecular RNA Polymerase/Chaperone Machine Required for Ribosome Biosynthesis.</title>
        <authorList>
            <person name="Huang Y.H."/>
            <person name="Hilal T."/>
            <person name="Loll B."/>
            <person name="Buerger J."/>
            <person name="Mielke T."/>
            <person name="Boettcher C."/>
            <person name="Said N."/>
            <person name="Wahl M.C."/>
        </authorList>
    </citation>
    <scope>STRUCTURE BY ELECTRON MICROSCOPY (3.80 ANGSTROMS) OF RRNA TRANSCRIPTION-ELONGATION-ANTITERMINATION COMPLEXES WITH AND WITHOUT S4 IN COMPLEX WITH MAGNESIUM AND ZINC</scope>
    <scope>FUNCTION</scope>
    <scope>SUBUNIT</scope>
    <scope>COFACTOR</scope>
</reference>
<organism>
    <name type="scientific">Escherichia coli (strain K12)</name>
    <dbReference type="NCBI Taxonomy" id="83333"/>
    <lineage>
        <taxon>Bacteria</taxon>
        <taxon>Pseudomonadati</taxon>
        <taxon>Pseudomonadota</taxon>
        <taxon>Gammaproteobacteria</taxon>
        <taxon>Enterobacterales</taxon>
        <taxon>Enterobacteriaceae</taxon>
        <taxon>Escherichia</taxon>
    </lineage>
</organism>
<accession>P0A8T7</accession>
<accession>P00577</accession>
<accession>P00578</accession>
<accession>P78134</accession>
<accession>Q2M8S4</accession>